<organism>
    <name type="scientific">Homo sapiens</name>
    <name type="common">Human</name>
    <dbReference type="NCBI Taxonomy" id="9606"/>
    <lineage>
        <taxon>Eukaryota</taxon>
        <taxon>Metazoa</taxon>
        <taxon>Chordata</taxon>
        <taxon>Craniata</taxon>
        <taxon>Vertebrata</taxon>
        <taxon>Euteleostomi</taxon>
        <taxon>Mammalia</taxon>
        <taxon>Eutheria</taxon>
        <taxon>Euarchontoglires</taxon>
        <taxon>Primates</taxon>
        <taxon>Haplorrhini</taxon>
        <taxon>Catarrhini</taxon>
        <taxon>Hominidae</taxon>
        <taxon>Homo</taxon>
    </lineage>
</organism>
<comment type="function">
    <molecule>Fibrillin-2</molecule>
    <text evidence="1">Fibrillins are structural components of 10-12 nm extracellular calcium-binding microfibrils, which occur either in association with elastin or in elastin-free bundles. Fibrillin-2-containing microfibrils regulate the early process of elastic fiber assembly. Regulates osteoblast maturation by controlling TGF-beta bioavailability and calibrating TGF-beta and BMP levels, respectively.</text>
</comment>
<comment type="function">
    <molecule>Placensin</molecule>
    <text evidence="1 18">Hormone secreted by trophoblasts that promotes trophoblast invasiveness (PubMed:32329225). Has glucogenic activity: is able to increase plasma glucose levels (By similarity).</text>
</comment>
<comment type="subunit">
    <text evidence="7 8 13 16">Interacts with BMP2, BMP4, BMP7, BMP10 and GDF5 (PubMed:18339631). Interacts with MFAP2 and MFAP5 (PubMed:15131124). Interacts with ADAMTSL5 (PubMed:23010571). Interacts with MFAP4 (PubMed:26601954).</text>
</comment>
<comment type="interaction">
    <interactant intactId="EBI-6164392">
        <id>P35556</id>
    </interactant>
    <interactant intactId="EBI-2505934">
        <id>P35555</id>
        <label>FBN1</label>
    </interactant>
    <organismsDiffer>false</organismsDiffer>
    <experiments>2</experiments>
</comment>
<comment type="interaction">
    <interactant intactId="EBI-6164392">
        <id>P35556</id>
    </interactant>
    <interactant intactId="EBI-1220319">
        <id>P02751</id>
        <label>FN1</label>
    </interactant>
    <organismsDiffer>false</organismsDiffer>
    <experiments>2</experiments>
</comment>
<comment type="subcellular location">
    <subcellularLocation>
        <location evidence="18">Secreted</location>
    </subcellularLocation>
    <text evidence="18">Fibrillin-2 and Placensin chains are still linked together during the secretion from cells, but are subsequently separated by furin.</text>
</comment>
<comment type="subcellular location">
    <molecule>Fibrillin-2</molecule>
    <subcellularLocation>
        <location evidence="21">Secreted</location>
        <location evidence="21">Extracellular space</location>
        <location evidence="21">Extracellular matrix</location>
    </subcellularLocation>
</comment>
<comment type="subcellular location">
    <molecule>Placensin</molecule>
    <subcellularLocation>
        <location evidence="18">Secreted</location>
    </subcellularLocation>
    <text evidence="18">Secreted by placental cells.</text>
</comment>
<comment type="alternative products">
    <event type="alternative splicing"/>
    <isoform>
        <id>P35556-1</id>
        <name>1</name>
        <sequence type="displayed"/>
    </isoform>
    <isoform>
        <id>P35556-2</id>
        <name>2</name>
        <sequence type="described" ref="VSP_037369 VSP_037370 VSP_037371"/>
    </isoform>
</comment>
<comment type="tissue specificity">
    <text evidence="14 18">Almost exclusively expressed in placenta (PubMed:32329225). Expressed at much lower level in other tissues (PubMed:32329225). Expressed in fetal eye (18 weeks)in the retinal pigment epithelium (RPE), the choroid, Bruch's membrane and in the sclera (PubMed:24899048). Not expressed in the neural retina (PubMed:24899048).</text>
</comment>
<comment type="tissue specificity">
    <molecule>Placensin</molecule>
    <text evidence="18">Present at high level in cytotrophoblasts as compared with syncytiotrophoblasts at 8-9 weeks of pregnancy (at protein level) (PubMed:32329225). Levels in the serum increase during pregnancy (at protein level) (PubMed:32329225).</text>
</comment>
<comment type="PTM">
    <molecule>Placensin</molecule>
    <text evidence="18">N-glycosylated.</text>
</comment>
<comment type="PTM">
    <text evidence="19">O-glycosylated on serine residues by POGLUT2 and POGLUT3.</text>
</comment>
<comment type="disease" evidence="5 6 9 11 15 17 20 22 23">
    <disease id="DI-01397">
        <name>Contractural arachnodactyly, congenital</name>
        <acronym>CCA</acronym>
        <description>An autosomal dominant connective tissue disorder characterized by contractures, arachnodactyly, scoliosis, and crumpled ears.</description>
        <dbReference type="MIM" id="121050"/>
    </disease>
    <text>The disease is caused by variants affecting the gene represented in this entry.</text>
</comment>
<comment type="disease" evidence="14">
    <disease id="DI-04285">
        <name>Macular degeneration, early-onset</name>
        <acronym>EOMD</acronym>
        <description>An ocular disorder characterized by macular changes resulting in progressive loss of visual acuity.</description>
        <dbReference type="MIM" id="616118"/>
    </disease>
    <text>The disease is caused by variants affecting the gene represented in this entry.</text>
</comment>
<comment type="similarity">
    <text evidence="27">Belongs to the fibrillin family.</text>
</comment>
<name>FBN2_HUMAN</name>
<feature type="signal peptide" evidence="2">
    <location>
        <begin position="1"/>
        <end position="28"/>
    </location>
</feature>
<feature type="propeptide" id="PRO_0000436887" evidence="27">
    <location>
        <begin position="29"/>
        <end position="77"/>
    </location>
</feature>
<feature type="chain" id="PRO_0000007584" description="Fibrillin-2" evidence="27">
    <location>
        <begin position="78"/>
        <end position="2779"/>
    </location>
</feature>
<feature type="chain" id="PRO_0000436888" description="Placensin" evidence="28">
    <location>
        <begin position="2780"/>
        <end position="2912"/>
    </location>
</feature>
<feature type="domain" description="EGF-like 1" evidence="3">
    <location>
        <begin position="111"/>
        <end position="142"/>
    </location>
</feature>
<feature type="domain" description="EGF-like 2" evidence="3">
    <location>
        <begin position="145"/>
        <end position="176"/>
    </location>
</feature>
<feature type="domain" description="EGF-like 3" evidence="3">
    <location>
        <begin position="176"/>
        <end position="208"/>
    </location>
</feature>
<feature type="domain" description="TB 1">
    <location>
        <begin position="214"/>
        <end position="266"/>
    </location>
</feature>
<feature type="domain" description="EGF-like 4; calcium-binding" evidence="3">
    <location>
        <begin position="276"/>
        <end position="317"/>
    </location>
</feature>
<feature type="domain" description="EGF-like 5; calcium-binding" evidence="3">
    <location>
        <begin position="318"/>
        <end position="359"/>
    </location>
</feature>
<feature type="domain" description="TB 2">
    <location>
        <begin position="364"/>
        <end position="417"/>
    </location>
</feature>
<feature type="domain" description="EGF-like 6" evidence="3">
    <location>
        <begin position="494"/>
        <end position="534"/>
    </location>
</feature>
<feature type="domain" description="EGF-like 7; calcium-binding" evidence="3">
    <location>
        <begin position="535"/>
        <end position="574"/>
    </location>
</feature>
<feature type="domain" description="EGF-like 8; calcium-binding" evidence="3">
    <location>
        <begin position="575"/>
        <end position="616"/>
    </location>
</feature>
<feature type="domain" description="EGF-like 9; calcium-binding" evidence="3">
    <location>
        <begin position="617"/>
        <end position="657"/>
    </location>
</feature>
<feature type="domain" description="EGF-like 10; calcium-binding" evidence="3">
    <location>
        <begin position="658"/>
        <end position="698"/>
    </location>
</feature>
<feature type="domain" description="TB 3">
    <location>
        <begin position="704"/>
        <end position="756"/>
    </location>
</feature>
<feature type="domain" description="EGF-like 11; calcium-binding" evidence="3">
    <location>
        <begin position="768"/>
        <end position="809"/>
    </location>
</feature>
<feature type="domain" description="EGF-like 12; calcium-binding" evidence="3">
    <location>
        <begin position="810"/>
        <end position="851"/>
    </location>
</feature>
<feature type="domain" description="EGF-like 13; calcium-binding" evidence="3">
    <location>
        <begin position="852"/>
        <end position="891"/>
    </location>
</feature>
<feature type="domain" description="TB 4">
    <location>
        <begin position="896"/>
        <end position="947"/>
    </location>
</feature>
<feature type="domain" description="EGF-like 14; calcium-binding" evidence="3">
    <location>
        <begin position="955"/>
        <end position="996"/>
    </location>
</feature>
<feature type="domain" description="TB 5">
    <location>
        <begin position="1001"/>
        <end position="1052"/>
    </location>
</feature>
<feature type="domain" description="EGF-like 15; calcium-binding" evidence="3">
    <location>
        <begin position="1073"/>
        <end position="1114"/>
    </location>
</feature>
<feature type="domain" description="EGF-like 16; calcium-binding" evidence="3">
    <location>
        <begin position="1115"/>
        <end position="1157"/>
    </location>
</feature>
<feature type="domain" description="EGF-like 17; calcium-binding" evidence="3">
    <location>
        <begin position="1158"/>
        <end position="1199"/>
    </location>
</feature>
<feature type="domain" description="EGF-like 18; calcium-binding" evidence="3">
    <location>
        <begin position="1200"/>
        <end position="1241"/>
    </location>
</feature>
<feature type="domain" description="EGF-like 19; calcium-binding" evidence="3">
    <location>
        <begin position="1242"/>
        <end position="1282"/>
    </location>
</feature>
<feature type="domain" description="EGF-like 20; calcium-binding" evidence="3">
    <location>
        <begin position="1283"/>
        <end position="1324"/>
    </location>
</feature>
<feature type="domain" description="EGF-like 21; calcium-binding" evidence="3">
    <location>
        <begin position="1325"/>
        <end position="1366"/>
    </location>
</feature>
<feature type="domain" description="EGF-like 22; calcium-binding" evidence="3">
    <location>
        <begin position="1367"/>
        <end position="1407"/>
    </location>
</feature>
<feature type="domain" description="EGF-like 23; calcium-binding" evidence="3">
    <location>
        <begin position="1408"/>
        <end position="1448"/>
    </location>
</feature>
<feature type="domain" description="EGF-like 24; calcium-binding" evidence="3">
    <location>
        <begin position="1449"/>
        <end position="1490"/>
    </location>
</feature>
<feature type="domain" description="EGF-like 25; calcium-binding" evidence="3">
    <location>
        <begin position="1491"/>
        <end position="1531"/>
    </location>
</feature>
<feature type="domain" description="EGF-like 26; calcium-binding" evidence="3">
    <location>
        <begin position="1532"/>
        <end position="1572"/>
    </location>
</feature>
<feature type="domain" description="TB 6">
    <location>
        <begin position="1577"/>
        <end position="1633"/>
    </location>
</feature>
<feature type="domain" description="EGF-like 27; calcium-binding" evidence="3">
    <location>
        <begin position="1650"/>
        <end position="1691"/>
    </location>
</feature>
<feature type="domain" description="EGF-like 28; calcium-binding" evidence="3">
    <location>
        <begin position="1692"/>
        <end position="1733"/>
    </location>
</feature>
<feature type="domain" description="TB 7">
    <location>
        <begin position="1738"/>
        <end position="1791"/>
    </location>
</feature>
<feature type="domain" description="EGF-like 29; calcium-binding" evidence="3">
    <location>
        <begin position="1808"/>
        <end position="1849"/>
    </location>
</feature>
<feature type="domain" description="EGF-like 30; calcium-binding" evidence="3">
    <location>
        <begin position="1850"/>
        <end position="1891"/>
    </location>
</feature>
<feature type="domain" description="EGF-like 31; calcium-binding" evidence="3">
    <location>
        <begin position="1892"/>
        <end position="1933"/>
    </location>
</feature>
<feature type="domain" description="EGF-like 32; calcium-binding" evidence="3">
    <location>
        <begin position="1934"/>
        <end position="1972"/>
    </location>
</feature>
<feature type="domain" description="EGF-like 33; calcium-binding" evidence="3">
    <location>
        <begin position="1973"/>
        <end position="2015"/>
    </location>
</feature>
<feature type="domain" description="EGF-like 34; calcium-binding" evidence="3">
    <location>
        <begin position="2016"/>
        <end position="2055"/>
    </location>
</feature>
<feature type="domain" description="EGF-like 35; calcium-binding" evidence="3">
    <location>
        <begin position="2056"/>
        <end position="2097"/>
    </location>
</feature>
<feature type="domain" description="TB 8">
    <location>
        <begin position="2102"/>
        <end position="2155"/>
    </location>
</feature>
<feature type="domain" description="EGF-like 36; calcium-binding" evidence="3">
    <location>
        <begin position="2171"/>
        <end position="2212"/>
    </location>
</feature>
<feature type="domain" description="EGF-like 37; calcium-binding" evidence="3">
    <location>
        <begin position="2213"/>
        <end position="2252"/>
    </location>
</feature>
<feature type="domain" description="EGF-like 38; calcium-binding" evidence="3">
    <location>
        <begin position="2253"/>
        <end position="2293"/>
    </location>
</feature>
<feature type="domain" description="EGF-like 39; calcium-binding" evidence="3">
    <location>
        <begin position="2294"/>
        <end position="2337"/>
    </location>
</feature>
<feature type="domain" description="EGF-like 40; calcium-binding" evidence="3">
    <location>
        <begin position="2338"/>
        <end position="2379"/>
    </location>
</feature>
<feature type="domain" description="TB 9">
    <location>
        <begin position="2384"/>
        <end position="2437"/>
    </location>
</feature>
<feature type="domain" description="EGF-like 41; calcium-binding" evidence="3">
    <location>
        <begin position="2449"/>
        <end position="2490"/>
    </location>
</feature>
<feature type="domain" description="EGF-like 42; calcium-binding" evidence="3">
    <location>
        <begin position="2491"/>
        <end position="2531"/>
    </location>
</feature>
<feature type="domain" description="EGF-like 43; calcium-binding" evidence="3">
    <location>
        <begin position="2532"/>
        <end position="2570"/>
    </location>
</feature>
<feature type="domain" description="EGF-like 44; calcium-binding" evidence="3">
    <location>
        <begin position="2571"/>
        <end position="2613"/>
    </location>
</feature>
<feature type="domain" description="EGF-like 45; calcium-binding" evidence="3">
    <location>
        <begin position="2614"/>
        <end position="2653"/>
    </location>
</feature>
<feature type="domain" description="EGF-like 46; calcium-binding" evidence="3">
    <location>
        <begin position="2654"/>
        <end position="2694"/>
    </location>
</feature>
<feature type="domain" description="EGF-like 47; calcium-binding" evidence="3">
    <location>
        <begin position="2695"/>
        <end position="2734"/>
    </location>
</feature>
<feature type="region of interest" description="Disordered" evidence="4">
    <location>
        <begin position="27"/>
        <end position="52"/>
    </location>
</feature>
<feature type="region of interest" description="Interaction with MFAP4" evidence="16">
    <location>
        <begin position="149"/>
        <end position="359"/>
    </location>
</feature>
<feature type="region of interest" description="Interaction with MFAP4" evidence="16">
    <location>
        <begin position="1735"/>
        <end position="2171"/>
    </location>
</feature>
<feature type="compositionally biased region" description="Pro residues" evidence="4">
    <location>
        <begin position="30"/>
        <end position="45"/>
    </location>
</feature>
<feature type="glycosylation site" description="O-linked (Glc) serine" evidence="19">
    <location>
        <position position="298"/>
    </location>
</feature>
<feature type="glycosylation site" description="O-linked (Glc) serine" evidence="19">
    <location>
        <position position="340"/>
    </location>
</feature>
<feature type="glycosylation site" description="N-linked (GlcNAc...) asparagine" evidence="2">
    <location>
        <position position="492"/>
    </location>
</feature>
<feature type="glycosylation site" description="O-linked (Glc) serine" evidence="19">
    <location>
        <position position="516"/>
    </location>
</feature>
<feature type="glycosylation site" description="O-linked (Glc) serine" evidence="19">
    <location>
        <position position="555"/>
    </location>
</feature>
<feature type="glycosylation site" description="O-linked (Glc) serine" evidence="19">
    <location>
        <position position="597"/>
    </location>
</feature>
<feature type="glycosylation site" description="O-linked (Glc) serine" evidence="19">
    <location>
        <position position="638"/>
    </location>
</feature>
<feature type="glycosylation site" description="O-linked (Glc) serine" evidence="19">
    <location>
        <position position="679"/>
    </location>
</feature>
<feature type="glycosylation site" description="O-linked (Glc) serine" evidence="19">
    <location>
        <position position="832"/>
    </location>
</feature>
<feature type="glycosylation site" description="O-linked (Glc) serine" evidence="19">
    <location>
        <position position="872"/>
    </location>
</feature>
<feature type="glycosylation site" description="O-linked (Glc) serine" evidence="19">
    <location>
        <position position="977"/>
    </location>
</feature>
<feature type="glycosylation site" description="O-linked (Glc) serine" evidence="19">
    <location>
        <position position="1095"/>
    </location>
</feature>
<feature type="glycosylation site" description="N-linked (GlcNAc...) asparagine" evidence="10">
    <location>
        <position position="1112"/>
    </location>
</feature>
<feature type="glycosylation site" description="O-linked (Glc) serine" evidence="19">
    <location>
        <position position="1180"/>
    </location>
</feature>
<feature type="glycosylation site" description="O-linked (Glc) threonine" evidence="19">
    <location>
        <position position="1222"/>
    </location>
</feature>
<feature type="glycosylation site" description="O-linked (Glc) serine" evidence="19">
    <location>
        <position position="1263"/>
    </location>
</feature>
<feature type="glycosylation site" description="O-linked (Glc) serine" evidence="19">
    <location>
        <position position="1347"/>
    </location>
</feature>
<feature type="glycosylation site" description="O-linked (Glc) serine" evidence="19">
    <location>
        <position position="1390"/>
    </location>
</feature>
<feature type="glycosylation site" description="N-linked (GlcNAc...) asparagine" evidence="2">
    <location>
        <position position="1414"/>
    </location>
</feature>
<feature type="glycosylation site" description="N-linked (GlcNAc...) asparagine" evidence="2">
    <location>
        <position position="1529"/>
    </location>
</feature>
<feature type="glycosylation site" description="N-linked (GlcNAc...) asparagine" evidence="2">
    <location>
        <position position="1625"/>
    </location>
</feature>
<feature type="glycosylation site" description="O-linked (Glc) serine" evidence="19">
    <location>
        <position position="1672"/>
    </location>
</feature>
<feature type="glycosylation site" description="N-linked (GlcNAc...) asparagine" evidence="2">
    <location>
        <position position="1714"/>
    </location>
</feature>
<feature type="glycosylation site" description="N-linked (GlcNAc...) asparagine" evidence="2">
    <location>
        <position position="1745"/>
    </location>
</feature>
<feature type="glycosylation site" description="N-linked (GlcNAc...) asparagine" evidence="2">
    <location>
        <position position="1756"/>
    </location>
</feature>
<feature type="glycosylation site" description="O-linked (Glc) serine" evidence="19">
    <location>
        <position position="1873"/>
    </location>
</feature>
<feature type="glycosylation site" description="N-linked (GlcNAc...) asparagine" evidence="2">
    <location>
        <position position="1945"/>
    </location>
</feature>
<feature type="glycosylation site" description="O-linked (Glc) serine" evidence="19">
    <location>
        <position position="1954"/>
    </location>
</feature>
<feature type="glycosylation site" description="O-linked (Glc) serine" evidence="19">
    <location>
        <position position="1996"/>
    </location>
</feature>
<feature type="glycosylation site" description="N-linked (GlcNAc...) asparagine" evidence="2">
    <location>
        <position position="2120"/>
    </location>
</feature>
<feature type="glycosylation site" description="O-linked (Glc) serine" evidence="19">
    <location>
        <position position="2193"/>
    </location>
</feature>
<feature type="glycosylation site" description="N-linked (GlcNAc...) asparagine" evidence="2">
    <location>
        <position position="2225"/>
    </location>
</feature>
<feature type="glycosylation site" description="O-linked (Glc) serine" evidence="19">
    <location>
        <position position="2274"/>
    </location>
</feature>
<feature type="glycosylation site" description="O-linked (Glc) serine" evidence="19">
    <location>
        <position position="2360"/>
    </location>
</feature>
<feature type="glycosylation site" description="O-linked (Glc) serine" evidence="19">
    <location>
        <position position="2471"/>
    </location>
</feature>
<feature type="glycosylation site" description="O-linked (Glc) serine" evidence="19">
    <location>
        <position position="2512"/>
    </location>
</feature>
<feature type="glycosylation site" description="O-linked (Glc) serine" evidence="19">
    <location>
        <position position="2594"/>
    </location>
</feature>
<feature type="glycosylation site" description="O-linked (Glc) serine" evidence="19">
    <location>
        <position position="2675"/>
    </location>
</feature>
<feature type="glycosylation site" description="N-linked (GlcNAc...) asparagine" evidence="2">
    <location>
        <position position="2808"/>
    </location>
</feature>
<feature type="disulfide bond" evidence="3">
    <location>
        <begin position="115"/>
        <end position="124"/>
    </location>
</feature>
<feature type="disulfide bond" evidence="3">
    <location>
        <begin position="119"/>
        <end position="130"/>
    </location>
</feature>
<feature type="disulfide bond" evidence="3">
    <location>
        <begin position="132"/>
        <end position="141"/>
    </location>
</feature>
<feature type="disulfide bond" evidence="3">
    <location>
        <begin position="149"/>
        <end position="159"/>
    </location>
</feature>
<feature type="disulfide bond" evidence="3">
    <location>
        <begin position="153"/>
        <end position="164"/>
    </location>
</feature>
<feature type="disulfide bond" evidence="3">
    <location>
        <begin position="166"/>
        <end position="175"/>
    </location>
</feature>
<feature type="disulfide bond" evidence="3">
    <location>
        <begin position="180"/>
        <end position="190"/>
    </location>
</feature>
<feature type="disulfide bond" evidence="3">
    <location>
        <begin position="184"/>
        <end position="196"/>
    </location>
</feature>
<feature type="disulfide bond" evidence="3">
    <location>
        <begin position="198"/>
        <end position="207"/>
    </location>
</feature>
<feature type="disulfide bond" evidence="3">
    <location>
        <begin position="280"/>
        <end position="292"/>
    </location>
</feature>
<feature type="disulfide bond" evidence="3">
    <location>
        <begin position="287"/>
        <end position="301"/>
    </location>
</feature>
<feature type="disulfide bond" evidence="3">
    <location>
        <begin position="303"/>
        <end position="316"/>
    </location>
</feature>
<feature type="disulfide bond" evidence="3">
    <location>
        <begin position="322"/>
        <end position="334"/>
    </location>
</feature>
<feature type="disulfide bond" evidence="3">
    <location>
        <begin position="329"/>
        <end position="343"/>
    </location>
</feature>
<feature type="disulfide bond" evidence="3">
    <location>
        <begin position="345"/>
        <end position="358"/>
    </location>
</feature>
<feature type="disulfide bond" evidence="3">
    <location>
        <begin position="498"/>
        <end position="510"/>
    </location>
</feature>
<feature type="disulfide bond" evidence="3">
    <location>
        <begin position="505"/>
        <end position="519"/>
    </location>
</feature>
<feature type="disulfide bond" evidence="3">
    <location>
        <begin position="521"/>
        <end position="533"/>
    </location>
</feature>
<feature type="disulfide bond" evidence="3">
    <location>
        <begin position="539"/>
        <end position="549"/>
    </location>
</feature>
<feature type="disulfide bond" evidence="3">
    <location>
        <begin position="544"/>
        <end position="558"/>
    </location>
</feature>
<feature type="disulfide bond" evidence="3">
    <location>
        <begin position="560"/>
        <end position="573"/>
    </location>
</feature>
<feature type="disulfide bond" evidence="3">
    <location>
        <begin position="579"/>
        <end position="591"/>
    </location>
</feature>
<feature type="disulfide bond" evidence="3">
    <location>
        <begin position="586"/>
        <end position="600"/>
    </location>
</feature>
<feature type="disulfide bond" evidence="3">
    <location>
        <begin position="602"/>
        <end position="615"/>
    </location>
</feature>
<feature type="disulfide bond" evidence="3">
    <location>
        <begin position="621"/>
        <end position="632"/>
    </location>
</feature>
<feature type="disulfide bond" evidence="3">
    <location>
        <begin position="627"/>
        <end position="641"/>
    </location>
</feature>
<feature type="disulfide bond" evidence="3">
    <location>
        <begin position="643"/>
        <end position="656"/>
    </location>
</feature>
<feature type="disulfide bond" evidence="3">
    <location>
        <begin position="662"/>
        <end position="673"/>
    </location>
</feature>
<feature type="disulfide bond" evidence="3">
    <location>
        <begin position="668"/>
        <end position="682"/>
    </location>
</feature>
<feature type="disulfide bond" evidence="3">
    <location>
        <begin position="684"/>
        <end position="697"/>
    </location>
</feature>
<feature type="disulfide bond" evidence="3">
    <location>
        <begin position="772"/>
        <end position="784"/>
    </location>
</feature>
<feature type="disulfide bond" evidence="3">
    <location>
        <begin position="779"/>
        <end position="793"/>
    </location>
</feature>
<feature type="disulfide bond" evidence="3">
    <location>
        <begin position="795"/>
        <end position="808"/>
    </location>
</feature>
<feature type="disulfide bond" evidence="3">
    <location>
        <begin position="814"/>
        <end position="826"/>
    </location>
</feature>
<feature type="disulfide bond" evidence="3">
    <location>
        <begin position="821"/>
        <end position="835"/>
    </location>
</feature>
<feature type="disulfide bond" evidence="3">
    <location>
        <begin position="837"/>
        <end position="850"/>
    </location>
</feature>
<feature type="disulfide bond" evidence="3">
    <location>
        <begin position="856"/>
        <end position="866"/>
    </location>
</feature>
<feature type="disulfide bond" evidence="3">
    <location>
        <begin position="861"/>
        <end position="875"/>
    </location>
</feature>
<feature type="disulfide bond" evidence="3">
    <location>
        <begin position="877"/>
        <end position="890"/>
    </location>
</feature>
<feature type="disulfide bond" evidence="3">
    <location>
        <begin position="959"/>
        <end position="971"/>
    </location>
</feature>
<feature type="disulfide bond" evidence="3">
    <location>
        <begin position="966"/>
        <end position="980"/>
    </location>
</feature>
<feature type="disulfide bond" evidence="3">
    <location>
        <begin position="982"/>
        <end position="995"/>
    </location>
</feature>
<feature type="disulfide bond" evidence="3">
    <location>
        <begin position="1077"/>
        <end position="1089"/>
    </location>
</feature>
<feature type="disulfide bond" evidence="3">
    <location>
        <begin position="1084"/>
        <end position="1098"/>
    </location>
</feature>
<feature type="disulfide bond" evidence="3">
    <location>
        <begin position="1100"/>
        <end position="1113"/>
    </location>
</feature>
<feature type="disulfide bond" evidence="3">
    <location>
        <begin position="1119"/>
        <end position="1131"/>
    </location>
</feature>
<feature type="disulfide bond" evidence="3">
    <location>
        <begin position="1126"/>
        <end position="1140"/>
    </location>
</feature>
<feature type="disulfide bond" evidence="3">
    <location>
        <begin position="1142"/>
        <end position="1156"/>
    </location>
</feature>
<feature type="disulfide bond" evidence="3">
    <location>
        <begin position="1162"/>
        <end position="1174"/>
    </location>
</feature>
<feature type="disulfide bond" evidence="3">
    <location>
        <begin position="1169"/>
        <end position="1183"/>
    </location>
</feature>
<feature type="disulfide bond" evidence="3">
    <location>
        <begin position="1185"/>
        <end position="1198"/>
    </location>
</feature>
<feature type="disulfide bond" evidence="3">
    <location>
        <begin position="1204"/>
        <end position="1216"/>
    </location>
</feature>
<feature type="disulfide bond" evidence="3">
    <location>
        <begin position="1211"/>
        <end position="1225"/>
    </location>
</feature>
<feature type="disulfide bond" evidence="3">
    <location>
        <begin position="1227"/>
        <end position="1240"/>
    </location>
</feature>
<feature type="disulfide bond" evidence="3">
    <location>
        <begin position="1246"/>
        <end position="1257"/>
    </location>
</feature>
<feature type="disulfide bond" evidence="3">
    <location>
        <begin position="1253"/>
        <end position="1266"/>
    </location>
</feature>
<feature type="disulfide bond" evidence="3">
    <location>
        <begin position="1268"/>
        <end position="1281"/>
    </location>
</feature>
<feature type="disulfide bond" evidence="3">
    <location>
        <begin position="1287"/>
        <end position="1299"/>
    </location>
</feature>
<feature type="disulfide bond" evidence="3">
    <location>
        <begin position="1294"/>
        <end position="1308"/>
    </location>
</feature>
<feature type="disulfide bond" evidence="3">
    <location>
        <begin position="1310"/>
        <end position="1323"/>
    </location>
</feature>
<feature type="disulfide bond" evidence="3">
    <location>
        <begin position="1329"/>
        <end position="1341"/>
    </location>
</feature>
<feature type="disulfide bond" evidence="3">
    <location>
        <begin position="1336"/>
        <end position="1350"/>
    </location>
</feature>
<feature type="disulfide bond" evidence="3">
    <location>
        <begin position="1352"/>
        <end position="1365"/>
    </location>
</feature>
<feature type="disulfide bond" evidence="3">
    <location>
        <begin position="1371"/>
        <end position="1384"/>
    </location>
</feature>
<feature type="disulfide bond" evidence="3">
    <location>
        <begin position="1378"/>
        <end position="1393"/>
    </location>
</feature>
<feature type="disulfide bond" evidence="3">
    <location>
        <begin position="1395"/>
        <end position="1406"/>
    </location>
</feature>
<feature type="disulfide bond" evidence="3">
    <location>
        <begin position="1412"/>
        <end position="1425"/>
    </location>
</feature>
<feature type="disulfide bond" evidence="3">
    <location>
        <begin position="1419"/>
        <end position="1434"/>
    </location>
</feature>
<feature type="disulfide bond" evidence="3">
    <location>
        <begin position="1436"/>
        <end position="1447"/>
    </location>
</feature>
<feature type="disulfide bond" evidence="3">
    <location>
        <begin position="1453"/>
        <end position="1465"/>
    </location>
</feature>
<feature type="disulfide bond" evidence="3">
    <location>
        <begin position="1460"/>
        <end position="1474"/>
    </location>
</feature>
<feature type="disulfide bond" evidence="3">
    <location>
        <begin position="1476"/>
        <end position="1489"/>
    </location>
</feature>
<feature type="disulfide bond" evidence="3">
    <location>
        <begin position="1495"/>
        <end position="1506"/>
    </location>
</feature>
<feature type="disulfide bond" evidence="3">
    <location>
        <begin position="1501"/>
        <end position="1515"/>
    </location>
</feature>
<feature type="disulfide bond" evidence="3">
    <location>
        <begin position="1517"/>
        <end position="1530"/>
    </location>
</feature>
<feature type="disulfide bond" evidence="3">
    <location>
        <begin position="1536"/>
        <end position="1547"/>
    </location>
</feature>
<feature type="disulfide bond" evidence="3">
    <location>
        <begin position="1542"/>
        <end position="1556"/>
    </location>
</feature>
<feature type="disulfide bond" evidence="3">
    <location>
        <begin position="1558"/>
        <end position="1571"/>
    </location>
</feature>
<feature type="disulfide bond" evidence="3">
    <location>
        <begin position="1654"/>
        <end position="1666"/>
    </location>
</feature>
<feature type="disulfide bond" evidence="3">
    <location>
        <begin position="1661"/>
        <end position="1675"/>
    </location>
</feature>
<feature type="disulfide bond" evidence="3">
    <location>
        <begin position="1677"/>
        <end position="1690"/>
    </location>
</feature>
<feature type="disulfide bond" evidence="3">
    <location>
        <begin position="1696"/>
        <end position="1708"/>
    </location>
</feature>
<feature type="disulfide bond" evidence="3">
    <location>
        <begin position="1703"/>
        <end position="1717"/>
    </location>
</feature>
<feature type="disulfide bond" evidence="3">
    <location>
        <begin position="1719"/>
        <end position="1732"/>
    </location>
</feature>
<feature type="disulfide bond" evidence="3">
    <location>
        <begin position="1812"/>
        <end position="1824"/>
    </location>
</feature>
<feature type="disulfide bond" evidence="3">
    <location>
        <begin position="1819"/>
        <end position="1833"/>
    </location>
</feature>
<feature type="disulfide bond" evidence="3">
    <location>
        <begin position="1835"/>
        <end position="1848"/>
    </location>
</feature>
<feature type="disulfide bond" evidence="3">
    <location>
        <begin position="1854"/>
        <end position="1867"/>
    </location>
</feature>
<feature type="disulfide bond" evidence="3">
    <location>
        <begin position="1861"/>
        <end position="1876"/>
    </location>
</feature>
<feature type="disulfide bond" evidence="3">
    <location>
        <begin position="1878"/>
        <end position="1890"/>
    </location>
</feature>
<feature type="disulfide bond" evidence="3">
    <location>
        <begin position="1896"/>
        <end position="1908"/>
    </location>
</feature>
<feature type="disulfide bond" evidence="3">
    <location>
        <begin position="1903"/>
        <end position="1917"/>
    </location>
</feature>
<feature type="disulfide bond" evidence="3">
    <location>
        <begin position="1919"/>
        <end position="1932"/>
    </location>
</feature>
<feature type="disulfide bond" evidence="3">
    <location>
        <begin position="1938"/>
        <end position="1948"/>
    </location>
</feature>
<feature type="disulfide bond" evidence="3">
    <location>
        <begin position="1943"/>
        <end position="1957"/>
    </location>
</feature>
<feature type="disulfide bond" evidence="3">
    <location>
        <begin position="1959"/>
        <end position="1971"/>
    </location>
</feature>
<feature type="disulfide bond" evidence="3">
    <location>
        <begin position="1977"/>
        <end position="1990"/>
    </location>
</feature>
<feature type="disulfide bond" evidence="3">
    <location>
        <begin position="1985"/>
        <end position="1999"/>
    </location>
</feature>
<feature type="disulfide bond" evidence="3">
    <location>
        <begin position="2001"/>
        <end position="2014"/>
    </location>
</feature>
<feature type="disulfide bond" evidence="3">
    <location>
        <begin position="2020"/>
        <end position="2032"/>
    </location>
</feature>
<feature type="disulfide bond" evidence="3">
    <location>
        <begin position="2027"/>
        <end position="2041"/>
    </location>
</feature>
<feature type="disulfide bond" evidence="3">
    <location>
        <begin position="2043"/>
        <end position="2054"/>
    </location>
</feature>
<feature type="disulfide bond" evidence="3">
    <location>
        <begin position="2060"/>
        <end position="2072"/>
    </location>
</feature>
<feature type="disulfide bond" evidence="3">
    <location>
        <begin position="2067"/>
        <end position="2081"/>
    </location>
</feature>
<feature type="disulfide bond" evidence="3">
    <location>
        <begin position="2083"/>
        <end position="2096"/>
    </location>
</feature>
<feature type="disulfide bond" evidence="3">
    <location>
        <begin position="2175"/>
        <end position="2187"/>
    </location>
</feature>
<feature type="disulfide bond" evidence="3">
    <location>
        <begin position="2182"/>
        <end position="2196"/>
    </location>
</feature>
<feature type="disulfide bond" evidence="3">
    <location>
        <begin position="2198"/>
        <end position="2211"/>
    </location>
</feature>
<feature type="disulfide bond" evidence="3">
    <location>
        <begin position="2217"/>
        <end position="2228"/>
    </location>
</feature>
<feature type="disulfide bond" evidence="3">
    <location>
        <begin position="2223"/>
        <end position="2237"/>
    </location>
</feature>
<feature type="disulfide bond" evidence="3">
    <location>
        <begin position="2239"/>
        <end position="2251"/>
    </location>
</feature>
<feature type="disulfide bond" evidence="3">
    <location>
        <begin position="2257"/>
        <end position="2268"/>
    </location>
</feature>
<feature type="disulfide bond" evidence="3">
    <location>
        <begin position="2264"/>
        <end position="2277"/>
    </location>
</feature>
<feature type="disulfide bond" evidence="3">
    <location>
        <begin position="2279"/>
        <end position="2292"/>
    </location>
</feature>
<feature type="disulfide bond" evidence="3">
    <location>
        <begin position="2298"/>
        <end position="2312"/>
    </location>
</feature>
<feature type="disulfide bond" evidence="3">
    <location>
        <begin position="2305"/>
        <end position="2321"/>
    </location>
</feature>
<feature type="disulfide bond" evidence="3">
    <location>
        <begin position="2323"/>
        <end position="2336"/>
    </location>
</feature>
<feature type="disulfide bond" evidence="3">
    <location>
        <begin position="2342"/>
        <end position="2354"/>
    </location>
</feature>
<feature type="disulfide bond" evidence="3">
    <location>
        <begin position="2349"/>
        <end position="2363"/>
    </location>
</feature>
<feature type="disulfide bond" evidence="3">
    <location>
        <begin position="2365"/>
        <end position="2378"/>
    </location>
</feature>
<feature type="disulfide bond" evidence="3">
    <location>
        <begin position="2453"/>
        <end position="2465"/>
    </location>
</feature>
<feature type="disulfide bond" evidence="3">
    <location>
        <begin position="2460"/>
        <end position="2474"/>
    </location>
</feature>
<feature type="disulfide bond" evidence="3">
    <location>
        <begin position="2476"/>
        <end position="2489"/>
    </location>
</feature>
<feature type="disulfide bond" evidence="3">
    <location>
        <begin position="2495"/>
        <end position="2506"/>
    </location>
</feature>
<feature type="disulfide bond" evidence="3">
    <location>
        <begin position="2502"/>
        <end position="2515"/>
    </location>
</feature>
<feature type="disulfide bond" evidence="3">
    <location>
        <begin position="2517"/>
        <end position="2530"/>
    </location>
</feature>
<feature type="disulfide bond" evidence="3">
    <location>
        <begin position="2536"/>
        <end position="2547"/>
    </location>
</feature>
<feature type="disulfide bond" evidence="3">
    <location>
        <begin position="2543"/>
        <end position="2556"/>
    </location>
</feature>
<feature type="disulfide bond" evidence="3">
    <location>
        <begin position="2558"/>
        <end position="2569"/>
    </location>
</feature>
<feature type="disulfide bond" evidence="3">
    <location>
        <begin position="2575"/>
        <end position="2588"/>
    </location>
</feature>
<feature type="disulfide bond" evidence="3">
    <location>
        <begin position="2582"/>
        <end position="2597"/>
    </location>
</feature>
<feature type="disulfide bond" evidence="3">
    <location>
        <begin position="2599"/>
        <end position="2612"/>
    </location>
</feature>
<feature type="disulfide bond" evidence="3">
    <location>
        <begin position="2618"/>
        <end position="2628"/>
    </location>
</feature>
<feature type="disulfide bond" evidence="3">
    <location>
        <begin position="2624"/>
        <end position="2637"/>
    </location>
</feature>
<feature type="disulfide bond" evidence="3">
    <location>
        <begin position="2639"/>
        <end position="2652"/>
    </location>
</feature>
<feature type="disulfide bond" evidence="3">
    <location>
        <begin position="2658"/>
        <end position="2669"/>
    </location>
</feature>
<feature type="disulfide bond" evidence="3">
    <location>
        <begin position="2664"/>
        <end position="2678"/>
    </location>
</feature>
<feature type="disulfide bond" evidence="3">
    <location>
        <begin position="2680"/>
        <end position="2693"/>
    </location>
</feature>
<feature type="disulfide bond" evidence="3">
    <location>
        <begin position="2699"/>
        <end position="2710"/>
    </location>
</feature>
<feature type="disulfide bond" evidence="3">
    <location>
        <begin position="2706"/>
        <end position="2719"/>
    </location>
</feature>
<feature type="disulfide bond" evidence="3">
    <location>
        <begin position="2721"/>
        <end position="2733"/>
    </location>
</feature>
<feature type="splice variant" id="VSP_037369" description="In isoform 2." evidence="24 25">
    <location>
        <begin position="113"/>
        <end position="145"/>
    </location>
</feature>
<feature type="splice variant" id="VSP_037370" description="In isoform 2." evidence="24 25">
    <original>DIDECSFQNICVFGTC</original>
    <variation>GGSPGFQLIFKLDQPQ</variation>
    <location>
        <begin position="1491"/>
        <end position="1506"/>
    </location>
</feature>
<feature type="splice variant" id="VSP_037371" description="In isoform 2." evidence="24 25">
    <location>
        <begin position="1507"/>
        <end position="2912"/>
    </location>
</feature>
<feature type="sequence variant" id="VAR_015851" description="In CCA; dbSNP:rs137852826.">
    <original>E</original>
    <variation>K</variation>
    <location>
        <position position="391"/>
    </location>
</feature>
<feature type="sequence variant" id="VAR_054979" evidence="21 22">
    <original>T</original>
    <variation>S</variation>
    <location>
        <position position="594"/>
    </location>
</feature>
<feature type="sequence variant" id="VAR_054980" description="In dbSNP:rs548605398." evidence="22">
    <original>R</original>
    <variation>H</variation>
    <location>
        <position position="681"/>
    </location>
</feature>
<feature type="sequence variant" id="VAR_058364" description="In CCA; dbSNP:rs145259927." evidence="9">
    <original>G</original>
    <variation>S</variation>
    <location>
        <position position="754"/>
    </location>
</feature>
<feature type="sequence variant" id="VAR_002349" description="In dbSNP:rs154001." evidence="6 14 20 22">
    <original>V</original>
    <variation>I</variation>
    <location>
        <position position="965"/>
    </location>
</feature>
<feature type="sequence variant" id="VAR_054981" description="In CCA." evidence="6 22">
    <original>G</original>
    <variation>D</variation>
    <location>
        <position position="1057"/>
    </location>
</feature>
<feature type="sequence variant" id="VAR_058365" description="In CCA; dbSNP:rs2126912169." evidence="9">
    <original>N</original>
    <variation>S</variation>
    <location>
        <position position="1091"/>
    </location>
</feature>
<feature type="sequence variant" id="VAR_054982" description="In CCA." evidence="6 22">
    <original>I</original>
    <variation>T</variation>
    <location>
        <position position="1093"/>
    </location>
</feature>
<feature type="sequence variant" id="VAR_010739" description="In CCA; the underlying nucleotide substitution also causes low level in-frame mis-splicing of exon 25; dbSNP:rs137852827." evidence="9 23">
    <original>D</original>
    <variation>H</variation>
    <location>
        <position position="1115"/>
    </location>
</feature>
<feature type="sequence variant" id="VAR_058366" description="In CCA." evidence="9">
    <original>S</original>
    <variation>P</variation>
    <location>
        <position position="1122"/>
    </location>
</feature>
<feature type="sequence variant" id="VAR_010740" description="In CCA; dbSNP:rs137852828." evidence="5 6">
    <original>C</original>
    <variation>F</variation>
    <location>
        <position position="1142"/>
    </location>
</feature>
<feature type="sequence variant" id="VAR_058367" description="In CCA; dbSNP:rs1750918931." evidence="9">
    <original>C</original>
    <variation>R</variation>
    <location>
        <position position="1142"/>
    </location>
</feature>
<feature type="sequence variant" id="VAR_072651" description="In EOMD; dbSNP:rs200060005." evidence="14">
    <original>E</original>
    <variation>K</variation>
    <location>
        <position position="1144"/>
    </location>
</feature>
<feature type="sequence variant" id="VAR_058368" description="In CCA; dbSNP:rs1750918319." evidence="9">
    <original>Y</original>
    <variation>C</variation>
    <location>
        <position position="1146"/>
    </location>
</feature>
<feature type="sequence variant" id="VAR_058369" description="In CCA; dbSNP:rs1206843725." evidence="9">
    <original>C</original>
    <variation>F</variation>
    <location>
        <position position="1156"/>
    </location>
</feature>
<feature type="sequence variant" id="VAR_058370" description="In CCA; dbSNP:rs1554123065." evidence="9">
    <original>E</original>
    <variation>K</variation>
    <location>
        <position position="1161"/>
    </location>
</feature>
<feature type="sequence variant" id="VAR_054983" description="In CCA." evidence="6">
    <original>G</original>
    <variation>C</variation>
    <location>
        <position position="1179"/>
    </location>
</feature>
<feature type="sequence variant" id="VAR_054984" description="In CCA; dbSNP:rs863223567." evidence="6">
    <original>C</original>
    <variation>Y</variation>
    <location>
        <position position="1198"/>
    </location>
</feature>
<feature type="sequence variant" id="VAR_054985" description="In CCA." evidence="6">
    <original>C</original>
    <variation>R</variation>
    <location>
        <position position="1240"/>
    </location>
</feature>
<feature type="sequence variant" id="VAR_058371" description="In CCA." evidence="9">
    <original>C</original>
    <variation>F</variation>
    <location>
        <position position="1246"/>
    </location>
</feature>
<feature type="sequence variant" id="VAR_072652" description="In EOMD; dbSNP:rs149054177." evidence="14">
    <original>M</original>
    <variation>T</variation>
    <location>
        <position position="1247"/>
    </location>
</feature>
<feature type="sequence variant" id="VAR_010741" description="In CCA; dbSNP:rs28931602." evidence="5 6">
    <original>C</original>
    <variation>W</variation>
    <location>
        <position position="1253"/>
    </location>
</feature>
<feature type="sequence variant" id="VAR_002350" description="In CCA; dbSNP:rs137852825." evidence="6 20">
    <original>C</original>
    <variation>Y</variation>
    <location>
        <position position="1253"/>
    </location>
</feature>
<feature type="sequence variant" id="VAR_076482" description="In CCA." evidence="17">
    <original>C</original>
    <variation>R</variation>
    <location>
        <position position="1257"/>
    </location>
</feature>
<feature type="sequence variant" id="VAR_054986" description="In CCA." evidence="6">
    <original>C</original>
    <variation>W</variation>
    <location>
        <position position="1257"/>
    </location>
</feature>
<feature type="sequence variant" id="VAR_072653" description="In CCA; dbSNP:rs267606802." evidence="11">
    <original>N</original>
    <variation>K</variation>
    <location>
        <position position="1259"/>
    </location>
</feature>
<feature type="sequence variant" id="VAR_054987" description="In CCA." evidence="6">
    <original>C</original>
    <variation>R</variation>
    <location>
        <position position="1268"/>
    </location>
</feature>
<feature type="sequence variant" id="VAR_072654" description="In dbSNP:rs78727187." evidence="14">
    <original>H</original>
    <variation>N</variation>
    <location>
        <position position="1381"/>
    </location>
</feature>
<feature type="sequence variant" id="VAR_058372" description="In CCA." evidence="9">
    <original>C</original>
    <variation>F</variation>
    <location>
        <position position="1384"/>
    </location>
</feature>
<feature type="sequence variant" id="VAR_058373" description="In CCA; dbSNP:rs794727560." evidence="9">
    <original>C</original>
    <variation>Y</variation>
    <location>
        <position position="1384"/>
    </location>
</feature>
<feature type="sequence variant" id="VAR_074052" description="In CCA." evidence="15">
    <original>C</original>
    <variation>R</variation>
    <location>
        <position position="1406"/>
    </location>
</feature>
<feature type="sequence variant" id="VAR_058374" description="In CCA." evidence="9">
    <original>D</original>
    <variation>N</variation>
    <location>
        <position position="1408"/>
    </location>
</feature>
<feature type="sequence variant" id="VAR_072655" description="In dbSNP:rs200837433." evidence="14">
    <original>T</original>
    <variation>A</variation>
    <location>
        <position position="1416"/>
    </location>
</feature>
<feature type="sequence variant" id="VAR_058375" description="In CCA." evidence="9">
    <original>C</original>
    <variation>R</variation>
    <location>
        <position position="1425"/>
    </location>
</feature>
<feature type="sequence variant" id="VAR_002351" description="In CCA; dbSNP:rs1750667332." evidence="6 20">
    <original>C</original>
    <variation>S</variation>
    <location>
        <position position="1434"/>
    </location>
</feature>
<feature type="sequence variant" id="VAR_072656" description="In dbSNP:rs56168072." evidence="14">
    <original>E</original>
    <variation>K</variation>
    <location>
        <position position="1438"/>
    </location>
</feature>
<feature type="sequence variant" id="VAR_054988" evidence="21 22">
    <original>W</original>
    <variation>G</variation>
    <location>
        <position position="1772"/>
    </location>
</feature>
<feature type="sequence variant" id="VAR_064705" description="Found in a renal cell carcinoma case; somatic mutation." evidence="12">
    <original>E</original>
    <variation>V</variation>
    <location>
        <position position="2062"/>
    </location>
</feature>
<feature type="sequence variant" id="VAR_054989" evidence="21 22">
    <original>F</original>
    <variation>L</variation>
    <location>
        <position position="2266"/>
    </location>
</feature>
<feature type="sequence variant" id="VAR_055415" description="In dbSNP:rs2307109.">
    <original>T</original>
    <variation>M</variation>
    <location>
        <position position="2278"/>
    </location>
</feature>
<feature type="sequence variant" id="VAR_055416" description="In dbSNP:rs32209.">
    <original>M</original>
    <variation>V</variation>
    <location>
        <position position="2311"/>
    </location>
</feature>
<feature type="sequence variant" id="VAR_016143" description="In dbSNP:rs1801169." evidence="22">
    <original>P</original>
    <variation>T</variation>
    <location>
        <position position="2428"/>
    </location>
</feature>
<feature type="sequence variant" id="VAR_055417" description="In dbSNP:rs2291628." evidence="21">
    <original>S</original>
    <variation>L</variation>
    <location>
        <position position="2580"/>
    </location>
</feature>
<feature type="sequence variant" id="VAR_054990" description="In dbSNP:rs2291628.">
    <original>L</original>
    <variation>S</variation>
    <location>
        <position position="2581"/>
    </location>
</feature>
<feature type="sequence variant" id="VAR_014664" description="In dbSNP:rs1801170." evidence="21 22">
    <original>S</original>
    <variation>P</variation>
    <location>
        <position position="2771"/>
    </location>
</feature>
<feature type="sequence conflict" description="In Ref. 2; BAG62163." evidence="27" ref="2">
    <original>I</original>
    <variation>L</variation>
    <location>
        <position position="146"/>
    </location>
</feature>
<feature type="sequence conflict" description="In Ref. 1; AAA18950." evidence="27" ref="1">
    <original>GPNR</original>
    <variation>AQP</variation>
    <location>
        <begin position="192"/>
        <end position="195"/>
    </location>
</feature>
<feature type="sequence conflict" description="In Ref. 1; AAA18950 and 2; BAG62163." evidence="27" ref="1 2">
    <original>I</original>
    <variation>T</variation>
    <location>
        <position position="243"/>
    </location>
</feature>
<feature type="sequence conflict" description="In Ref. 1; AAA18950 and 4; CAB56757." evidence="27" ref="1 4">
    <original>E</original>
    <variation>G</variation>
    <location>
        <position position="1161"/>
    </location>
</feature>
<feature type="sequence conflict" description="In Ref. 2; BAG62163." evidence="27" ref="2">
    <original>D</original>
    <variation>G</variation>
    <location>
        <position position="1244"/>
    </location>
</feature>
<feature type="sequence conflict" description="In Ref. 4; CAB56757." evidence="27" ref="4">
    <original>L</original>
    <variation>R</variation>
    <location>
        <position position="1409"/>
    </location>
</feature>
<feature type="sequence conflict" description="In Ref. 1; AAA18950." evidence="27" ref="1">
    <original>F</original>
    <variation>S</variation>
    <location>
        <position position="1503"/>
    </location>
</feature>
<feature type="sequence conflict" description="In Ref. 1; AAA18950." evidence="27" ref="1">
    <original>A</original>
    <variation>G</variation>
    <location>
        <position position="2584"/>
    </location>
</feature>
<reference key="1">
    <citation type="journal article" date="1994" name="J. Cell Biol.">
        <title>Structure and expression of fibrillin-2, a novel microfibrillar component preferentially located in elastic matrices.</title>
        <authorList>
            <person name="Zhang H."/>
            <person name="Apfelroth S.D."/>
            <person name="Hu W."/>
            <person name="Davis E.C."/>
            <person name="Sanguineti C."/>
            <person name="Bonadio J."/>
            <person name="Mecham R.P."/>
            <person name="Ramirez F."/>
        </authorList>
    </citation>
    <scope>NUCLEOTIDE SEQUENCE [MRNA] (ISOFORM 1)</scope>
    <scope>SUBCELLULAR LOCATION</scope>
    <scope>VARIANTS SER-594; GLY-1772; LEU-2266; LEU-2580 AND PRO-2771</scope>
</reference>
<reference key="2">
    <citation type="journal article" date="2004" name="Nat. Genet.">
        <title>Complete sequencing and characterization of 21,243 full-length human cDNAs.</title>
        <authorList>
            <person name="Ota T."/>
            <person name="Suzuki Y."/>
            <person name="Nishikawa T."/>
            <person name="Otsuki T."/>
            <person name="Sugiyama T."/>
            <person name="Irie R."/>
            <person name="Wakamatsu A."/>
            <person name="Hayashi K."/>
            <person name="Sato H."/>
            <person name="Nagai K."/>
            <person name="Kimura K."/>
            <person name="Makita H."/>
            <person name="Sekine M."/>
            <person name="Obayashi M."/>
            <person name="Nishi T."/>
            <person name="Shibahara T."/>
            <person name="Tanaka T."/>
            <person name="Ishii S."/>
            <person name="Yamamoto J."/>
            <person name="Saito K."/>
            <person name="Kawai Y."/>
            <person name="Isono Y."/>
            <person name="Nakamura Y."/>
            <person name="Nagahari K."/>
            <person name="Murakami K."/>
            <person name="Yasuda T."/>
            <person name="Iwayanagi T."/>
            <person name="Wagatsuma M."/>
            <person name="Shiratori A."/>
            <person name="Sudo H."/>
            <person name="Hosoiri T."/>
            <person name="Kaku Y."/>
            <person name="Kodaira H."/>
            <person name="Kondo H."/>
            <person name="Sugawara M."/>
            <person name="Takahashi M."/>
            <person name="Kanda K."/>
            <person name="Yokoi T."/>
            <person name="Furuya T."/>
            <person name="Kikkawa E."/>
            <person name="Omura Y."/>
            <person name="Abe K."/>
            <person name="Kamihara K."/>
            <person name="Katsuta N."/>
            <person name="Sato K."/>
            <person name="Tanikawa M."/>
            <person name="Yamazaki M."/>
            <person name="Ninomiya K."/>
            <person name="Ishibashi T."/>
            <person name="Yamashita H."/>
            <person name="Murakawa K."/>
            <person name="Fujimori K."/>
            <person name="Tanai H."/>
            <person name="Kimata M."/>
            <person name="Watanabe M."/>
            <person name="Hiraoka S."/>
            <person name="Chiba Y."/>
            <person name="Ishida S."/>
            <person name="Ono Y."/>
            <person name="Takiguchi S."/>
            <person name="Watanabe S."/>
            <person name="Yosida M."/>
            <person name="Hotuta T."/>
            <person name="Kusano J."/>
            <person name="Kanehori K."/>
            <person name="Takahashi-Fujii A."/>
            <person name="Hara H."/>
            <person name="Tanase T.-O."/>
            <person name="Nomura Y."/>
            <person name="Togiya S."/>
            <person name="Komai F."/>
            <person name="Hara R."/>
            <person name="Takeuchi K."/>
            <person name="Arita M."/>
            <person name="Imose N."/>
            <person name="Musashino K."/>
            <person name="Yuuki H."/>
            <person name="Oshima A."/>
            <person name="Sasaki N."/>
            <person name="Aotsuka S."/>
            <person name="Yoshikawa Y."/>
            <person name="Matsunawa H."/>
            <person name="Ichihara T."/>
            <person name="Shiohata N."/>
            <person name="Sano S."/>
            <person name="Moriya S."/>
            <person name="Momiyama H."/>
            <person name="Satoh N."/>
            <person name="Takami S."/>
            <person name="Terashima Y."/>
            <person name="Suzuki O."/>
            <person name="Nakagawa S."/>
            <person name="Senoh A."/>
            <person name="Mizoguchi H."/>
            <person name="Goto Y."/>
            <person name="Shimizu F."/>
            <person name="Wakebe H."/>
            <person name="Hishigaki H."/>
            <person name="Watanabe T."/>
            <person name="Sugiyama A."/>
            <person name="Takemoto M."/>
            <person name="Kawakami B."/>
            <person name="Yamazaki M."/>
            <person name="Watanabe K."/>
            <person name="Kumagai A."/>
            <person name="Itakura S."/>
            <person name="Fukuzumi Y."/>
            <person name="Fujimori Y."/>
            <person name="Komiyama M."/>
            <person name="Tashiro H."/>
            <person name="Tanigami A."/>
            <person name="Fujiwara T."/>
            <person name="Ono T."/>
            <person name="Yamada K."/>
            <person name="Fujii Y."/>
            <person name="Ozaki K."/>
            <person name="Hirao M."/>
            <person name="Ohmori Y."/>
            <person name="Kawabata A."/>
            <person name="Hikiji T."/>
            <person name="Kobatake N."/>
            <person name="Inagaki H."/>
            <person name="Ikema Y."/>
            <person name="Okamoto S."/>
            <person name="Okitani R."/>
            <person name="Kawakami T."/>
            <person name="Noguchi S."/>
            <person name="Itoh T."/>
            <person name="Shigeta K."/>
            <person name="Senba T."/>
            <person name="Matsumura K."/>
            <person name="Nakajima Y."/>
            <person name="Mizuno T."/>
            <person name="Morinaga M."/>
            <person name="Sasaki M."/>
            <person name="Togashi T."/>
            <person name="Oyama M."/>
            <person name="Hata H."/>
            <person name="Watanabe M."/>
            <person name="Komatsu T."/>
            <person name="Mizushima-Sugano J."/>
            <person name="Satoh T."/>
            <person name="Shirai Y."/>
            <person name="Takahashi Y."/>
            <person name="Nakagawa K."/>
            <person name="Okumura K."/>
            <person name="Nagase T."/>
            <person name="Nomura N."/>
            <person name="Kikuchi H."/>
            <person name="Masuho Y."/>
            <person name="Yamashita R."/>
            <person name="Nakai K."/>
            <person name="Yada T."/>
            <person name="Nakamura Y."/>
            <person name="Ohara O."/>
            <person name="Isogai T."/>
            <person name="Sugano S."/>
        </authorList>
    </citation>
    <scope>NUCLEOTIDE SEQUENCE [LARGE SCALE MRNA] (ISOFORM 2)</scope>
    <source>
        <tissue>Placenta</tissue>
    </source>
</reference>
<reference key="3">
    <citation type="journal article" date="2004" name="Nature">
        <title>The DNA sequence and comparative analysis of human chromosome 5.</title>
        <authorList>
            <person name="Schmutz J."/>
            <person name="Martin J."/>
            <person name="Terry A."/>
            <person name="Couronne O."/>
            <person name="Grimwood J."/>
            <person name="Lowry S."/>
            <person name="Gordon L.A."/>
            <person name="Scott D."/>
            <person name="Xie G."/>
            <person name="Huang W."/>
            <person name="Hellsten U."/>
            <person name="Tran-Gyamfi M."/>
            <person name="She X."/>
            <person name="Prabhakar S."/>
            <person name="Aerts A."/>
            <person name="Altherr M."/>
            <person name="Bajorek E."/>
            <person name="Black S."/>
            <person name="Branscomb E."/>
            <person name="Caoile C."/>
            <person name="Challacombe J.F."/>
            <person name="Chan Y.M."/>
            <person name="Denys M."/>
            <person name="Detter J.C."/>
            <person name="Escobar J."/>
            <person name="Flowers D."/>
            <person name="Fotopulos D."/>
            <person name="Glavina T."/>
            <person name="Gomez M."/>
            <person name="Gonzales E."/>
            <person name="Goodstein D."/>
            <person name="Grigoriev I."/>
            <person name="Groza M."/>
            <person name="Hammon N."/>
            <person name="Hawkins T."/>
            <person name="Haydu L."/>
            <person name="Israni S."/>
            <person name="Jett J."/>
            <person name="Kadner K."/>
            <person name="Kimball H."/>
            <person name="Kobayashi A."/>
            <person name="Lopez F."/>
            <person name="Lou Y."/>
            <person name="Martinez D."/>
            <person name="Medina C."/>
            <person name="Morgan J."/>
            <person name="Nandkeshwar R."/>
            <person name="Noonan J.P."/>
            <person name="Pitluck S."/>
            <person name="Pollard M."/>
            <person name="Predki P."/>
            <person name="Priest J."/>
            <person name="Ramirez L."/>
            <person name="Retterer J."/>
            <person name="Rodriguez A."/>
            <person name="Rogers S."/>
            <person name="Salamov A."/>
            <person name="Salazar A."/>
            <person name="Thayer N."/>
            <person name="Tice H."/>
            <person name="Tsai M."/>
            <person name="Ustaszewska A."/>
            <person name="Vo N."/>
            <person name="Wheeler J."/>
            <person name="Wu K."/>
            <person name="Yang J."/>
            <person name="Dickson M."/>
            <person name="Cheng J.-F."/>
            <person name="Eichler E.E."/>
            <person name="Olsen A."/>
            <person name="Pennacchio L.A."/>
            <person name="Rokhsar D.S."/>
            <person name="Richardson P."/>
            <person name="Lucas S.M."/>
            <person name="Myers R.M."/>
            <person name="Rubin E.M."/>
        </authorList>
    </citation>
    <scope>NUCLEOTIDE SEQUENCE [LARGE SCALE GENOMIC DNA]</scope>
</reference>
<reference key="4">
    <citation type="journal article" date="1991" name="Nature">
        <title>Linkage of Marfan syndrome and a phenotypically related disorder to two different fibrillin genes.</title>
        <authorList>
            <person name="Lee B."/>
            <person name="Godfrey M."/>
            <person name="Vitale E."/>
            <person name="Hori H."/>
            <person name="Mattei M.-G."/>
            <person name="Sarfarazi M."/>
            <person name="Tsipouras P."/>
            <person name="Ramirez F."/>
            <person name="Hollister D.W."/>
        </authorList>
    </citation>
    <scope>NUCLEOTIDE SEQUENCE [MRNA] OF 752-2912 (ISOFORM 2)</scope>
</reference>
<reference key="5">
    <citation type="submission" date="2005-03" db="EMBL/GenBank/DDBJ databases">
        <authorList>
            <person name="Totoki Y."/>
            <person name="Toyoda A."/>
            <person name="Takeda T."/>
            <person name="Sakaki Y."/>
            <person name="Tanaka A."/>
            <person name="Yokoyama S."/>
            <person name="Ohara O."/>
            <person name="Nagase T."/>
            <person name="Kikuno R.F."/>
        </authorList>
    </citation>
    <scope>NUCLEOTIDE SEQUENCE [LARGE SCALE MRNA] OF 937-2912 (ISOFORM 1)</scope>
    <source>
        <tissue>Aortic endothelium</tissue>
    </source>
</reference>
<reference key="6">
    <citation type="journal article" date="2004" name="J. Biol. Chem.">
        <title>MAGP-2 has multiple binding regions on fibrillins and has covalent periodic association with fibrillin-containing microfibrils.</title>
        <authorList>
            <person name="Hanssen E."/>
            <person name="Hew F.H."/>
            <person name="Moore E."/>
            <person name="Gibson M.A."/>
        </authorList>
    </citation>
    <scope>INTERACTION WITH MFAP2 AND MFAP5</scope>
</reference>
<reference key="7">
    <citation type="journal article" date="2008" name="J. Biol. Chem.">
        <title>Targeting of bone morphogenetic protein growth factor complexes to fibrillin.</title>
        <authorList>
            <person name="Sengle G."/>
            <person name="Charbonneau N.L."/>
            <person name="Ono R.N."/>
            <person name="Sasaki T."/>
            <person name="Alvarez J."/>
            <person name="Keene D.R."/>
            <person name="Baechinger H.P."/>
            <person name="Sakai L.Y."/>
        </authorList>
    </citation>
    <scope>INTERACTION WITH BMP2; BMP4; BMP7; BMP10 AND GDF5</scope>
</reference>
<reference key="8">
    <citation type="journal article" date="2009" name="J. Proteome Res.">
        <title>Glycoproteomics analysis of human liver tissue by combination of multiple enzyme digestion and hydrazide chemistry.</title>
        <authorList>
            <person name="Chen R."/>
            <person name="Jiang X."/>
            <person name="Sun D."/>
            <person name="Han G."/>
            <person name="Wang F."/>
            <person name="Ye M."/>
            <person name="Wang L."/>
            <person name="Zou H."/>
        </authorList>
    </citation>
    <scope>GLYCOSYLATION [LARGE SCALE ANALYSIS] AT ASN-1112</scope>
    <source>
        <tissue>Liver</tissue>
    </source>
</reference>
<reference key="9">
    <citation type="journal article" date="2012" name="Matrix Biol.">
        <title>A disintegrin-like and metalloprotease domain containing thrombospondin type 1 motif-like 5 (ADAMTSL5) is a novel fibrillin-1-, fibrillin-2-, and heparin-binding member of the ADAMTS superfamily containing a netrin-like module.</title>
        <authorList>
            <person name="Bader H.L."/>
            <person name="Wang L.W."/>
            <person name="Ho J.C."/>
            <person name="Tran T."/>
            <person name="Holden P."/>
            <person name="Fitzgerald J."/>
            <person name="Atit R.P."/>
            <person name="Reinhardt D.P."/>
            <person name="Apte S.S."/>
        </authorList>
    </citation>
    <scope>INTERACTION WITH ADAMTSL5</scope>
</reference>
<reference key="10">
    <citation type="journal article" date="2014" name="Hum. Mol. Genet.">
        <title>Rare and common variants in extracellular matrix gene Fibrillin 2 (FBN2) are associated with macular degeneration.</title>
        <authorList>
            <person name="Ratnapriya R."/>
            <person name="Zhan X."/>
            <person name="Fariss R.N."/>
            <person name="Branham K.E."/>
            <person name="Zipprer D."/>
            <person name="Chakarova C.F."/>
            <person name="Sergeev Y.V."/>
            <person name="Campos M.M."/>
            <person name="Othman M."/>
            <person name="Friedman J.S."/>
            <person name="Maminishkis A."/>
            <person name="Waseem N.H."/>
            <person name="Brooks M."/>
            <person name="Rajasimha H.K."/>
            <person name="Edwards A.O."/>
            <person name="Lotery A."/>
            <person name="Klein B.E."/>
            <person name="Truitt B.J."/>
            <person name="Li B."/>
            <person name="Schaumberg D.A."/>
            <person name="Morgan D.J."/>
            <person name="Morrison M.A."/>
            <person name="Souied E."/>
            <person name="Tsironi E.E."/>
            <person name="Grassmann F."/>
            <person name="Fishman G.A."/>
            <person name="Silvestri G."/>
            <person name="Scholl H.P."/>
            <person name="Kim I.K."/>
            <person name="Ramke J."/>
            <person name="Tuo J."/>
            <person name="Merriam J.E."/>
            <person name="Merriam J.C."/>
            <person name="Park K.H."/>
            <person name="Olson L.M."/>
            <person name="Farrer L.A."/>
            <person name="Johnson M.P."/>
            <person name="Peachey N.S."/>
            <person name="Lathrop M."/>
            <person name="Baron R.V."/>
            <person name="Igo R.P. Jr."/>
            <person name="Klein R."/>
            <person name="Hagstrom S.A."/>
            <person name="Kamatani Y."/>
            <person name="Martin T.M."/>
            <person name="Jiang Y."/>
            <person name="Conley Y."/>
            <person name="Sahel J.A."/>
            <person name="Zack D.J."/>
            <person name="Chan C.C."/>
            <person name="Pericak-Vance M.A."/>
            <person name="Jacobson S.G."/>
            <person name="Gorin M.B."/>
            <person name="Klein M.L."/>
            <person name="Allikmets R."/>
            <person name="Iyengar S.K."/>
            <person name="Weber B.H."/>
            <person name="Haines J.L."/>
            <person name="Leveillard T."/>
            <person name="Deangelis M.M."/>
            <person name="Stambolian D."/>
            <person name="Weeks D.E."/>
            <person name="Bhattacharya S.S."/>
            <person name="Chew E.Y."/>
            <person name="Heckenlively J.R."/>
            <person name="Abecasis G.R."/>
            <person name="Swaroop A."/>
        </authorList>
    </citation>
    <scope>TISSUE SPECIFICITY</scope>
    <scope>INVOLVEMENT IN EOMD</scope>
    <scope>VARIANTS EOMD LYS-1144 AND THR-1247</scope>
    <scope>VARIANTS ILE-965; ASN-1381; ALA-1416 AND LYS-1438</scope>
</reference>
<reference key="11">
    <citation type="journal article" date="2016" name="J. Biol. Chem.">
        <title>Characterization of microfibrillar-associated protein 4 (MFAP4) as a tropoelastin- and fibrillin-binding protein involved in elastic fiber formation.</title>
        <authorList>
            <person name="Pilecki B."/>
            <person name="Holm A.T."/>
            <person name="Schlosser A."/>
            <person name="Moeller J.B."/>
            <person name="Wohl A.P."/>
            <person name="Zuk A.V."/>
            <person name="Heumueller S.E."/>
            <person name="Wallis R."/>
            <person name="Moestrup S.K."/>
            <person name="Sengle G."/>
            <person name="Holmskov U."/>
            <person name="Sorensen G.L."/>
        </authorList>
    </citation>
    <scope>INTERACTION WITH MFAP4</scope>
</reference>
<reference key="12">
    <citation type="journal article" date="2020" name="EMBO Rep.">
        <title>Placensin is a glucogenic hormone secreted by human placenta.</title>
        <authorList>
            <person name="Yu Y."/>
            <person name="He J.H."/>
            <person name="Hu L.L."/>
            <person name="Jiang L.L."/>
            <person name="Fang L."/>
            <person name="Yao G.D."/>
            <person name="Wang S.J."/>
            <person name="Yang Q."/>
            <person name="Guo Y."/>
            <person name="Liu L."/>
            <person name="Shang T."/>
            <person name="Sato Y."/>
            <person name="Kawamura K."/>
            <person name="Hsueh A.J."/>
            <person name="Sun Y.P."/>
        </authorList>
    </citation>
    <scope>FUNCTION (PLACENSIN)</scope>
    <scope>SUBCELLULAR LOCATION (PLACENSIN)</scope>
    <scope>GLYCOSYLATION (PLACENSIN)</scope>
    <scope>TISSUE SPECIFICITY</scope>
    <scope>TISSUE SPECIFICITY (PLACENSIN)</scope>
</reference>
<reference key="13">
    <citation type="journal article" date="2021" name="J. Biol. Chem.">
        <title>POGLUT2 and POGLUT3 O-glucosylate multiple EGF repeats in fibrillin-1, -2, and LTBP1 and promote secretion of fibrillin-1.</title>
        <authorList>
            <person name="Williamson D.B."/>
            <person name="Sohn C.J."/>
            <person name="Ito A."/>
            <person name="Haltiwanger R.S."/>
        </authorList>
    </citation>
    <scope>GLYCOSYLATION AT SER-298; SER-340; SER-516; SER-555; SER-597; SER-638; SER-679; SER-832; SER-872; SER-977; SER-1095; SER-1180; THR-1222; SER-1263; SER-1347; SER-1390; SER-1672; SER-1873; SER-1954; SER-1996; SER-2193; SER-2274; SER-2360; SER-2471; SER-2512; SER-2594 AND SER-2675</scope>
</reference>
<reference key="14">
    <citation type="journal article" date="1995" name="Nat. Genet.">
        <title>Fibrillin-2 (FBN2) mutations result in the Marfan-like disorder, congenital contractural arachnodactyly.</title>
        <authorList>
            <person name="Putnam E.A."/>
            <person name="Zhang H."/>
            <person name="Ramirez F."/>
            <person name="Milewicz D.M."/>
        </authorList>
    </citation>
    <scope>VARIANTS CCA TYR-1253 AND SER-1434</scope>
    <scope>VARIANT ILE-965</scope>
</reference>
<reference key="15">
    <citation type="journal article" date="1998" name="Am. J. Med. Genet.">
        <title>Clustering of FBN2 mutations in patients with congenital contractural arachnodactyly indicates an important role of the domains encoded by exons 24 through 34 during human development.</title>
        <authorList>
            <person name="Park E.-S."/>
            <person name="Putnam E.A."/>
            <person name="Chitayat D."/>
            <person name="Child A."/>
            <person name="Milewicz D.M."/>
        </authorList>
    </citation>
    <scope>VARIANTS CCA ASP-1057 AND THR-1093</scope>
    <scope>VARIANTS SER-594; HIS-681; ILE-965; GLY-1772; LEU-2266; THR-2428 AND PRO-2771</scope>
</reference>
<reference key="16">
    <citation type="journal article" date="1998" name="Hum. Genet.">
        <title>A single mutation that results in an Asp-to-His substitution and partial exon skipping in a family with congenital contractural arachnodactyly.</title>
        <authorList>
            <person name="Babcock D."/>
            <person name="Gasner C."/>
            <person name="Francke U."/>
            <person name="Maslen C."/>
        </authorList>
    </citation>
    <scope>VARIANT CCA HIS-1115</scope>
</reference>
<reference key="17">
    <citation type="journal article" date="2000" name="Am. J. Med. Genet.">
        <title>Two novel fibrillin-2 mutations in congenital contractural arachnodactyly.</title>
        <authorList>
            <person name="Belleh S."/>
            <person name="Zhou G."/>
            <person name="Wang M."/>
            <person name="Der Kaloustian V.M."/>
            <person name="Pagon R.A."/>
            <person name="Godfrey M."/>
        </authorList>
    </citation>
    <scope>VARIANTS CCA PHE-1142 AND TRP-1253</scope>
</reference>
<reference key="18">
    <citation type="journal article" date="2002" name="Hum. Mutat.">
        <title>Ten novel FBN2 mutations in congenital contractural arachnodactyly: delineation of the molecular pathogenesis and clinical phenotype.</title>
        <authorList>
            <person name="Gupta P.A."/>
            <person name="Putnam E.A."/>
            <person name="Carmical S.G."/>
            <person name="Kaitila I."/>
            <person name="Steinmann B."/>
            <person name="Child A."/>
            <person name="Danesino C."/>
            <person name="Metcalfe K."/>
            <person name="Berry S.A."/>
            <person name="Chen E."/>
            <person name="Delorme C.V."/>
            <person name="Thong M.-K."/>
            <person name="Ades L.C."/>
            <person name="Milewicz D.M."/>
        </authorList>
    </citation>
    <scope>VARIANTS CCA ASP-1057; THR-1093; PHE-1142; CYS-1179; TYR-1198; ARG-1240; TRP-1253; TYR-1253; TRP-1257; ARG-1268 AND SER-1434</scope>
    <scope>VARIANT ILE-965</scope>
</reference>
<reference key="19">
    <citation type="journal article" date="2009" name="Hum. Mutat.">
        <title>Comprehensive clinical and molecular assessment of 32 probands with congenital contractural arachnodactyly: report of 14 novel mutations and review of the literature.</title>
        <authorList>
            <person name="Callewaert B.L."/>
            <person name="Loeys B.L."/>
            <person name="Ficcadenti A."/>
            <person name="Vermeer S."/>
            <person name="Landgren M."/>
            <person name="Kroes H.Y."/>
            <person name="Yaron Y."/>
            <person name="Pope M."/>
            <person name="Foulds N."/>
            <person name="Boute O."/>
            <person name="Galan F."/>
            <person name="Kingston H."/>
            <person name="Van der Aa N."/>
            <person name="Salcedo I."/>
            <person name="Swinkels M.E."/>
            <person name="Wallgren-Pettersson C."/>
            <person name="Gabrielli O."/>
            <person name="De Backer J."/>
            <person name="Coucke P.J."/>
            <person name="De Paepe A.M."/>
        </authorList>
    </citation>
    <scope>VARIANTS CCA SER-754; SER-1091; HIS-1115; PRO-1122; ARG-1142; CYS-1146; PHE-1156; LYS-1161; PHE-1246; PHE-1384; TYR-1384; ASN-1408 AND ARG-1425</scope>
</reference>
<reference key="20">
    <citation type="journal article" date="2010" name="Am. J. Med. Genet. A">
        <title>Evidence for a recurrent microdeletion at chromosome 16p11.2 associated with congenital anomalies of the kidney and urinary tract (CAKUT) and Hirschsprung disease.</title>
        <authorList>
            <person name="Sampson M.G."/>
            <person name="Coughlin C.R. II"/>
            <person name="Kaplan P."/>
            <person name="Conlin L.K."/>
            <person name="Meyers K.E."/>
            <person name="Zackai E.H."/>
            <person name="Spinner N.B."/>
            <person name="Copelovitch L."/>
        </authorList>
    </citation>
    <scope>VARIANT CCA LYS-1259</scope>
</reference>
<reference key="21">
    <citation type="journal article" date="2011" name="Nature">
        <title>Exome sequencing identifies frequent mutation of the SWI/SNF complex gene PBRM1 in renal carcinoma.</title>
        <authorList>
            <person name="Varela I."/>
            <person name="Tarpey P."/>
            <person name="Raine K."/>
            <person name="Huang D."/>
            <person name="Ong C.K."/>
            <person name="Stephens P."/>
            <person name="Davies H."/>
            <person name="Jones D."/>
            <person name="Lin M.L."/>
            <person name="Teague J."/>
            <person name="Bignell G."/>
            <person name="Butler A."/>
            <person name="Cho J."/>
            <person name="Dalgliesh G.L."/>
            <person name="Galappaththige D."/>
            <person name="Greenman C."/>
            <person name="Hardy C."/>
            <person name="Jia M."/>
            <person name="Latimer C."/>
            <person name="Lau K.W."/>
            <person name="Marshall J."/>
            <person name="McLaren S."/>
            <person name="Menzies A."/>
            <person name="Mudie L."/>
            <person name="Stebbings L."/>
            <person name="Largaespada D.A."/>
            <person name="Wessels L.F.A."/>
            <person name="Richard S."/>
            <person name="Kahnoski R.J."/>
            <person name="Anema J."/>
            <person name="Tuveson D.A."/>
            <person name="Perez-Mancera P.A."/>
            <person name="Mustonen V."/>
            <person name="Fischer A."/>
            <person name="Adams D.J."/>
            <person name="Rust A."/>
            <person name="Chan-On W."/>
            <person name="Subimerb C."/>
            <person name="Dykema K."/>
            <person name="Furge K."/>
            <person name="Campbell P.J."/>
            <person name="Teh B.T."/>
            <person name="Stratton M.R."/>
            <person name="Futreal P.A."/>
        </authorList>
    </citation>
    <scope>VARIANT VAL-2062</scope>
</reference>
<reference key="22">
    <citation type="journal article" date="2015" name="FEBS Open Bio">
        <title>A novel FBN2 mutation in a Chinese family with congenital contractural arachnodactyly.</title>
        <authorList>
            <person name="Liu W."/>
            <person name="Zhao N."/>
            <person name="Li X.F."/>
            <person name="Wang H."/>
            <person name="Sui Y."/>
            <person name="Lu Y.P."/>
            <person name="Feng W.H."/>
            <person name="Ma C."/>
            <person name="Han W.T."/>
            <person name="Jiang M."/>
        </authorList>
    </citation>
    <scope>VARIANT CCA ARG-1406</scope>
</reference>
<reference key="23">
    <citation type="journal article" date="2016" name="PLoS ONE">
        <title>Identification of a Novel Missense FBN2 Mutation in a Chinese Family with Congenital Contractural Arachnodactyly Using Exome Sequencing.</title>
        <authorList>
            <person name="Deng H."/>
            <person name="Lu Q."/>
            <person name="Xu H."/>
            <person name="Deng X."/>
            <person name="Yuan L."/>
            <person name="Yang Z."/>
            <person name="Guo Y."/>
            <person name="Lin Q."/>
            <person name="Xiao J."/>
            <person name="Guan L."/>
            <person name="Song Z."/>
        </authorList>
    </citation>
    <scope>VARIANT CCA ARG-1257</scope>
</reference>
<accession>P35556</accession>
<accession>B4DU01</accession>
<accession>Q59ES6</accession>
<protein>
    <recommendedName>
        <fullName evidence="26">Fibrillin-2</fullName>
    </recommendedName>
    <component>
        <recommendedName>
            <fullName evidence="26">Placensin</fullName>
        </recommendedName>
    </component>
</protein>
<evidence type="ECO:0000250" key="1">
    <source>
        <dbReference type="UniProtKB" id="Q61555"/>
    </source>
</evidence>
<evidence type="ECO:0000255" key="2"/>
<evidence type="ECO:0000255" key="3">
    <source>
        <dbReference type="PROSITE-ProRule" id="PRU00076"/>
    </source>
</evidence>
<evidence type="ECO:0000256" key="4">
    <source>
        <dbReference type="SAM" id="MobiDB-lite"/>
    </source>
</evidence>
<evidence type="ECO:0000269" key="5">
    <source>
    </source>
</evidence>
<evidence type="ECO:0000269" key="6">
    <source>
    </source>
</evidence>
<evidence type="ECO:0000269" key="7">
    <source>
    </source>
</evidence>
<evidence type="ECO:0000269" key="8">
    <source>
    </source>
</evidence>
<evidence type="ECO:0000269" key="9">
    <source>
    </source>
</evidence>
<evidence type="ECO:0000269" key="10">
    <source>
    </source>
</evidence>
<evidence type="ECO:0000269" key="11">
    <source>
    </source>
</evidence>
<evidence type="ECO:0000269" key="12">
    <source>
    </source>
</evidence>
<evidence type="ECO:0000269" key="13">
    <source>
    </source>
</evidence>
<evidence type="ECO:0000269" key="14">
    <source>
    </source>
</evidence>
<evidence type="ECO:0000269" key="15">
    <source>
    </source>
</evidence>
<evidence type="ECO:0000269" key="16">
    <source>
    </source>
</evidence>
<evidence type="ECO:0000269" key="17">
    <source>
    </source>
</evidence>
<evidence type="ECO:0000269" key="18">
    <source>
    </source>
</evidence>
<evidence type="ECO:0000269" key="19">
    <source>
    </source>
</evidence>
<evidence type="ECO:0000269" key="20">
    <source>
    </source>
</evidence>
<evidence type="ECO:0000269" key="21">
    <source>
    </source>
</evidence>
<evidence type="ECO:0000269" key="22">
    <source>
    </source>
</evidence>
<evidence type="ECO:0000269" key="23">
    <source>
    </source>
</evidence>
<evidence type="ECO:0000303" key="24">
    <source>
    </source>
</evidence>
<evidence type="ECO:0000303" key="25">
    <source>
    </source>
</evidence>
<evidence type="ECO:0000303" key="26">
    <source>
    </source>
</evidence>
<evidence type="ECO:0000305" key="27"/>
<evidence type="ECO:0000305" key="28">
    <source>
    </source>
</evidence>
<evidence type="ECO:0000312" key="29">
    <source>
        <dbReference type="HGNC" id="HGNC:3604"/>
    </source>
</evidence>
<dbReference type="EMBL" id="U03272">
    <property type="protein sequence ID" value="AAA18950.1"/>
    <property type="molecule type" value="mRNA"/>
</dbReference>
<dbReference type="EMBL" id="AK300440">
    <property type="protein sequence ID" value="BAG62163.1"/>
    <property type="molecule type" value="mRNA"/>
</dbReference>
<dbReference type="EMBL" id="AC025169">
    <property type="status" value="NOT_ANNOTATED_CDS"/>
    <property type="molecule type" value="Genomic_DNA"/>
</dbReference>
<dbReference type="EMBL" id="AC034235">
    <property type="status" value="NOT_ANNOTATED_CDS"/>
    <property type="molecule type" value="Genomic_DNA"/>
</dbReference>
<dbReference type="EMBL" id="AC113387">
    <property type="status" value="NOT_ANNOTATED_CDS"/>
    <property type="molecule type" value="Genomic_DNA"/>
</dbReference>
<dbReference type="EMBL" id="X62009">
    <property type="protein sequence ID" value="CAB56757.1"/>
    <property type="molecule type" value="mRNA"/>
</dbReference>
<dbReference type="EMBL" id="AB209735">
    <property type="protein sequence ID" value="BAD92972.1"/>
    <property type="molecule type" value="mRNA"/>
</dbReference>
<dbReference type="CCDS" id="CCDS34222.1">
    <molecule id="P35556-1"/>
</dbReference>
<dbReference type="PIR" id="A54105">
    <property type="entry name" value="A54105"/>
</dbReference>
<dbReference type="RefSeq" id="NP_001990.2">
    <molecule id="P35556-1"/>
    <property type="nucleotide sequence ID" value="NM_001999.4"/>
</dbReference>
<dbReference type="SMR" id="P35556"/>
<dbReference type="BioGRID" id="108495">
    <property type="interactions" value="60"/>
</dbReference>
<dbReference type="FunCoup" id="P35556">
    <property type="interactions" value="591"/>
</dbReference>
<dbReference type="IntAct" id="P35556">
    <property type="interactions" value="43"/>
</dbReference>
<dbReference type="MINT" id="P35556"/>
<dbReference type="STRING" id="9606.ENSP00000424571"/>
<dbReference type="DrugBank" id="DB11093">
    <property type="generic name" value="Calcium citrate"/>
</dbReference>
<dbReference type="DrugBank" id="DB11348">
    <property type="generic name" value="Calcium Phosphate"/>
</dbReference>
<dbReference type="DrugBank" id="DB14481">
    <property type="generic name" value="Calcium phosphate dihydrate"/>
</dbReference>
<dbReference type="GlyConnect" id="1236">
    <property type="glycosylation" value="13 N-Linked glycans (2 sites)"/>
</dbReference>
<dbReference type="GlyCosmos" id="P35556">
    <property type="glycosylation" value="39 sites, 13 glycans"/>
</dbReference>
<dbReference type="GlyGen" id="P35556">
    <property type="glycosylation" value="44 sites, 19 N-linked glycans (7 sites), 2 O-linked glycans (3 sites)"/>
</dbReference>
<dbReference type="iPTMnet" id="P35556"/>
<dbReference type="PhosphoSitePlus" id="P35556"/>
<dbReference type="SwissPalm" id="P35556"/>
<dbReference type="BioMuta" id="FBN2"/>
<dbReference type="DMDM" id="238054385"/>
<dbReference type="jPOST" id="P35556"/>
<dbReference type="MassIVE" id="P35556"/>
<dbReference type="PaxDb" id="9606-ENSP00000424571"/>
<dbReference type="PeptideAtlas" id="P35556"/>
<dbReference type="ProteomicsDB" id="55082">
    <molecule id="P35556-1"/>
</dbReference>
<dbReference type="ProteomicsDB" id="55083">
    <molecule id="P35556-2"/>
</dbReference>
<dbReference type="Pumba" id="P35556"/>
<dbReference type="Antibodypedia" id="2482">
    <property type="antibodies" value="160 antibodies from 29 providers"/>
</dbReference>
<dbReference type="DNASU" id="2201"/>
<dbReference type="Ensembl" id="ENST00000262464.9">
    <molecule id="P35556-1"/>
    <property type="protein sequence ID" value="ENSP00000262464.4"/>
    <property type="gene ID" value="ENSG00000138829.14"/>
</dbReference>
<dbReference type="GeneID" id="2201"/>
<dbReference type="KEGG" id="hsa:2201"/>
<dbReference type="MANE-Select" id="ENST00000262464.9">
    <property type="protein sequence ID" value="ENSP00000262464.4"/>
    <property type="RefSeq nucleotide sequence ID" value="NM_001999.4"/>
    <property type="RefSeq protein sequence ID" value="NP_001990.2"/>
</dbReference>
<dbReference type="UCSC" id="uc003kuu.3">
    <molecule id="P35556-1"/>
    <property type="organism name" value="human"/>
</dbReference>
<dbReference type="AGR" id="HGNC:3604"/>
<dbReference type="CTD" id="2201"/>
<dbReference type="DisGeNET" id="2201"/>
<dbReference type="GeneCards" id="FBN2"/>
<dbReference type="GeneReviews" id="FBN2"/>
<dbReference type="HGNC" id="HGNC:3604">
    <property type="gene designation" value="FBN2"/>
</dbReference>
<dbReference type="HPA" id="ENSG00000138829">
    <property type="expression patterns" value="Tissue enriched (placenta)"/>
</dbReference>
<dbReference type="MalaCards" id="FBN2"/>
<dbReference type="MIM" id="121050">
    <property type="type" value="phenotype"/>
</dbReference>
<dbReference type="MIM" id="612570">
    <property type="type" value="gene"/>
</dbReference>
<dbReference type="MIM" id="616118">
    <property type="type" value="phenotype"/>
</dbReference>
<dbReference type="neXtProt" id="NX_P35556"/>
<dbReference type="OpenTargets" id="ENSG00000138829"/>
<dbReference type="Orphanet" id="115">
    <property type="disease" value="Congenital contractural arachnodactyly"/>
</dbReference>
<dbReference type="PharmGKB" id="PA28017"/>
<dbReference type="VEuPathDB" id="HostDB:ENSG00000138829"/>
<dbReference type="eggNOG" id="KOG1217">
    <property type="taxonomic scope" value="Eukaryota"/>
</dbReference>
<dbReference type="GeneTree" id="ENSGT00950000183158"/>
<dbReference type="HOGENOM" id="CLU_000233_0_0_1"/>
<dbReference type="InParanoid" id="P35556"/>
<dbReference type="OMA" id="CTPLDQC"/>
<dbReference type="OrthoDB" id="4062651at2759"/>
<dbReference type="PAN-GO" id="P35556">
    <property type="GO annotations" value="3 GO annotations based on evolutionary models"/>
</dbReference>
<dbReference type="PhylomeDB" id="P35556"/>
<dbReference type="TreeFam" id="TF316849"/>
<dbReference type="PathwayCommons" id="P35556"/>
<dbReference type="Reactome" id="R-HSA-1474228">
    <property type="pathway name" value="Degradation of the extracellular matrix"/>
</dbReference>
<dbReference type="Reactome" id="R-HSA-1566948">
    <property type="pathway name" value="Elastic fibre formation"/>
</dbReference>
<dbReference type="Reactome" id="R-HSA-2129379">
    <property type="pathway name" value="Molecules associated with elastic fibres"/>
</dbReference>
<dbReference type="SignaLink" id="P35556"/>
<dbReference type="BioGRID-ORCS" id="2201">
    <property type="hits" value="12 hits in 1149 CRISPR screens"/>
</dbReference>
<dbReference type="ChiTaRS" id="FBN2">
    <property type="organism name" value="human"/>
</dbReference>
<dbReference type="GenomeRNAi" id="2201"/>
<dbReference type="Pharos" id="P35556">
    <property type="development level" value="Tbio"/>
</dbReference>
<dbReference type="PRO" id="PR:P35556"/>
<dbReference type="Proteomes" id="UP000005640">
    <property type="component" value="Chromosome 5"/>
</dbReference>
<dbReference type="RNAct" id="P35556">
    <property type="molecule type" value="protein"/>
</dbReference>
<dbReference type="Bgee" id="ENSG00000138829">
    <property type="expression patterns" value="Expressed in cartilage tissue and 127 other cell types or tissues"/>
</dbReference>
<dbReference type="ExpressionAtlas" id="P35556">
    <property type="expression patterns" value="baseline and differential"/>
</dbReference>
<dbReference type="GO" id="GO:0062023">
    <property type="term" value="C:collagen-containing extracellular matrix"/>
    <property type="evidence" value="ECO:0007005"/>
    <property type="project" value="UniProtKB"/>
</dbReference>
<dbReference type="GO" id="GO:0031012">
    <property type="term" value="C:extracellular matrix"/>
    <property type="evidence" value="ECO:0000318"/>
    <property type="project" value="GO_Central"/>
</dbReference>
<dbReference type="GO" id="GO:0005576">
    <property type="term" value="C:extracellular region"/>
    <property type="evidence" value="ECO:0000304"/>
    <property type="project" value="Reactome"/>
</dbReference>
<dbReference type="GO" id="GO:0001527">
    <property type="term" value="C:microfibril"/>
    <property type="evidence" value="ECO:0000314"/>
    <property type="project" value="UniProtKB"/>
</dbReference>
<dbReference type="GO" id="GO:0005509">
    <property type="term" value="F:calcium ion binding"/>
    <property type="evidence" value="ECO:0007669"/>
    <property type="project" value="InterPro"/>
</dbReference>
<dbReference type="GO" id="GO:0030023">
    <property type="term" value="F:extracellular matrix constituent conferring elasticity"/>
    <property type="evidence" value="ECO:0000305"/>
    <property type="project" value="UniProtKB"/>
</dbReference>
<dbReference type="GO" id="GO:0005201">
    <property type="term" value="F:extracellular matrix structural constituent"/>
    <property type="evidence" value="ECO:0000318"/>
    <property type="project" value="GO_Central"/>
</dbReference>
<dbReference type="GO" id="GO:0005179">
    <property type="term" value="F:hormone activity"/>
    <property type="evidence" value="ECO:0007669"/>
    <property type="project" value="UniProtKB-KW"/>
</dbReference>
<dbReference type="GO" id="GO:0009653">
    <property type="term" value="P:anatomical structure morphogenesis"/>
    <property type="evidence" value="ECO:0000318"/>
    <property type="project" value="GO_Central"/>
</dbReference>
<dbReference type="GO" id="GO:0060346">
    <property type="term" value="P:bone trabecula formation"/>
    <property type="evidence" value="ECO:0000250"/>
    <property type="project" value="BHF-UCL"/>
</dbReference>
<dbReference type="GO" id="GO:0043010">
    <property type="term" value="P:camera-type eye development"/>
    <property type="evidence" value="ECO:0000270"/>
    <property type="project" value="UniProtKB"/>
</dbReference>
<dbReference type="GO" id="GO:0048048">
    <property type="term" value="P:embryonic eye morphogenesis"/>
    <property type="evidence" value="ECO:0000270"/>
    <property type="project" value="UniProtKB"/>
</dbReference>
<dbReference type="GO" id="GO:0030326">
    <property type="term" value="P:embryonic limb morphogenesis"/>
    <property type="evidence" value="ECO:0007669"/>
    <property type="project" value="Ensembl"/>
</dbReference>
<dbReference type="GO" id="GO:0030501">
    <property type="term" value="P:positive regulation of bone mineralization"/>
    <property type="evidence" value="ECO:0000250"/>
    <property type="project" value="BHF-UCL"/>
</dbReference>
<dbReference type="GO" id="GO:0045669">
    <property type="term" value="P:positive regulation of osteoblast differentiation"/>
    <property type="evidence" value="ECO:0000250"/>
    <property type="project" value="BHF-UCL"/>
</dbReference>
<dbReference type="GO" id="GO:0035583">
    <property type="term" value="P:sequestering of TGFbeta in extracellular matrix"/>
    <property type="evidence" value="ECO:0000250"/>
    <property type="project" value="BHF-UCL"/>
</dbReference>
<dbReference type="CDD" id="cd11304">
    <property type="entry name" value="Cadherin_repeat"/>
    <property type="match status" value="1"/>
</dbReference>
<dbReference type="CDD" id="cd00054">
    <property type="entry name" value="EGF_CA"/>
    <property type="match status" value="29"/>
</dbReference>
<dbReference type="FunFam" id="2.10.25.10:FF:000023">
    <property type="entry name" value="Fibrillin 2"/>
    <property type="match status" value="2"/>
</dbReference>
<dbReference type="FunFam" id="2.10.25.10:FF:000038">
    <property type="entry name" value="Fibrillin 2"/>
    <property type="match status" value="1"/>
</dbReference>
<dbReference type="FunFam" id="2.10.25.10:FF:000044">
    <property type="entry name" value="Fibrillin 2"/>
    <property type="match status" value="1"/>
</dbReference>
<dbReference type="FunFam" id="2.10.25.10:FF:000049">
    <property type="entry name" value="Fibrillin 2"/>
    <property type="match status" value="2"/>
</dbReference>
<dbReference type="FunFam" id="2.10.25.10:FF:000058">
    <property type="entry name" value="Fibrillin 2"/>
    <property type="match status" value="1"/>
</dbReference>
<dbReference type="FunFam" id="2.10.25.10:FF:000071">
    <property type="entry name" value="Fibrillin 2"/>
    <property type="match status" value="1"/>
</dbReference>
<dbReference type="FunFam" id="2.10.25.10:FF:000086">
    <property type="entry name" value="Fibrillin 2"/>
    <property type="match status" value="1"/>
</dbReference>
<dbReference type="FunFam" id="2.10.25.10:FF:000087">
    <property type="entry name" value="Fibrillin 2"/>
    <property type="match status" value="1"/>
</dbReference>
<dbReference type="FunFam" id="2.10.25.10:FF:000097">
    <property type="entry name" value="Fibrillin 2"/>
    <property type="match status" value="1"/>
</dbReference>
<dbReference type="FunFam" id="2.10.25.10:FF:000107">
    <property type="entry name" value="Fibrillin 2"/>
    <property type="match status" value="1"/>
</dbReference>
<dbReference type="FunFam" id="2.10.25.10:FF:000131">
    <property type="entry name" value="Fibrillin 2"/>
    <property type="match status" value="1"/>
</dbReference>
<dbReference type="FunFam" id="2.10.25.10:FF:000141">
    <property type="entry name" value="Fibrillin 2"/>
    <property type="match status" value="1"/>
</dbReference>
<dbReference type="FunFam" id="2.10.25.10:FF:000149">
    <property type="entry name" value="Fibrillin 2"/>
    <property type="match status" value="1"/>
</dbReference>
<dbReference type="FunFam" id="2.10.25.10:FF:000159">
    <property type="entry name" value="Fibrillin 2"/>
    <property type="match status" value="1"/>
</dbReference>
<dbReference type="FunFam" id="2.10.25.10:FF:000171">
    <property type="entry name" value="Fibrillin 2"/>
    <property type="match status" value="1"/>
</dbReference>
<dbReference type="FunFam" id="2.10.25.10:FF:000196">
    <property type="entry name" value="Fibrillin 2"/>
    <property type="match status" value="1"/>
</dbReference>
<dbReference type="FunFam" id="2.10.25.10:FF:000264">
    <property type="entry name" value="Fibrillin 2"/>
    <property type="match status" value="1"/>
</dbReference>
<dbReference type="FunFam" id="3.90.290.10:FF:000005">
    <property type="entry name" value="Fibrillin 2"/>
    <property type="match status" value="1"/>
</dbReference>
<dbReference type="FunFam" id="3.90.290.10:FF:000006">
    <property type="entry name" value="Fibrillin 2"/>
    <property type="match status" value="1"/>
</dbReference>
<dbReference type="FunFam" id="3.90.290.10:FF:000007">
    <property type="entry name" value="Fibrillin 2"/>
    <property type="match status" value="1"/>
</dbReference>
<dbReference type="FunFam" id="3.90.290.10:FF:000009">
    <property type="entry name" value="Fibrillin 2"/>
    <property type="match status" value="1"/>
</dbReference>
<dbReference type="FunFam" id="3.90.290.10:FF:000010">
    <property type="entry name" value="Fibrillin 2"/>
    <property type="match status" value="1"/>
</dbReference>
<dbReference type="FunFam" id="3.90.290.10:FF:000011">
    <property type="entry name" value="Fibrillin 2"/>
    <property type="match status" value="1"/>
</dbReference>
<dbReference type="FunFam" id="3.90.290.10:FF:000014">
    <property type="entry name" value="Fibrillin 2"/>
    <property type="match status" value="1"/>
</dbReference>
<dbReference type="FunFam" id="2.10.25.10:FF:000133">
    <property type="entry name" value="Fibrillin 3"/>
    <property type="match status" value="1"/>
</dbReference>
<dbReference type="FunFam" id="3.90.290.10:FF:000003">
    <property type="entry name" value="Fibrillin 3"/>
    <property type="match status" value="1"/>
</dbReference>
<dbReference type="FunFam" id="3.90.290.10:FF:000008">
    <property type="entry name" value="Fibrillin 3"/>
    <property type="match status" value="1"/>
</dbReference>
<dbReference type="FunFam" id="2.10.25.10:FF:000003">
    <property type="entry name" value="fibrillin-1 isoform X1"/>
    <property type="match status" value="15"/>
</dbReference>
<dbReference type="FunFam" id="2.10.25.10:FF:000002">
    <property type="entry name" value="Latent-transforming growth factor beta-binding protein 3"/>
    <property type="match status" value="1"/>
</dbReference>
<dbReference type="FunFam" id="2.10.25.10:FF:000014">
    <property type="entry name" value="Latent-transforming growth factor beta-binding protein 3"/>
    <property type="match status" value="1"/>
</dbReference>
<dbReference type="FunFam" id="2.10.25.10:FF:000010">
    <property type="entry name" value="Pro-epidermal growth factor"/>
    <property type="match status" value="2"/>
</dbReference>
<dbReference type="FunFam" id="2.10.25.10:FF:000096">
    <property type="entry name" value="Putative fibrillin 2"/>
    <property type="match status" value="1"/>
</dbReference>
<dbReference type="FunFam" id="2.10.25.10:FF:000008">
    <property type="entry name" value="Signal peptide, CUB domain, EGF-like 2"/>
    <property type="match status" value="1"/>
</dbReference>
<dbReference type="Gene3D" id="2.10.25.10">
    <property type="entry name" value="Laminin"/>
    <property type="match status" value="46"/>
</dbReference>
<dbReference type="Gene3D" id="3.90.290.10">
    <property type="entry name" value="TGF-beta binding (TB) domain"/>
    <property type="match status" value="9"/>
</dbReference>
<dbReference type="InterPro" id="IPR026823">
    <property type="entry name" value="cEGF"/>
</dbReference>
<dbReference type="InterPro" id="IPR001881">
    <property type="entry name" value="EGF-like_Ca-bd_dom"/>
</dbReference>
<dbReference type="InterPro" id="IPR013032">
    <property type="entry name" value="EGF-like_CS"/>
</dbReference>
<dbReference type="InterPro" id="IPR000742">
    <property type="entry name" value="EGF-like_dom"/>
</dbReference>
<dbReference type="InterPro" id="IPR000152">
    <property type="entry name" value="EGF-type_Asp/Asn_hydroxyl_site"/>
</dbReference>
<dbReference type="InterPro" id="IPR018097">
    <property type="entry name" value="EGF_Ca-bd_CS"/>
</dbReference>
<dbReference type="InterPro" id="IPR024731">
    <property type="entry name" value="EGF_dom"/>
</dbReference>
<dbReference type="InterPro" id="IPR049388">
    <property type="entry name" value="FBN_EGF_N"/>
</dbReference>
<dbReference type="InterPro" id="IPR040872">
    <property type="entry name" value="Fibrillin_U_N"/>
</dbReference>
<dbReference type="InterPro" id="IPR009030">
    <property type="entry name" value="Growth_fac_rcpt_cys_sf"/>
</dbReference>
<dbReference type="InterPro" id="IPR049883">
    <property type="entry name" value="NOTCH1_EGF-like"/>
</dbReference>
<dbReference type="InterPro" id="IPR017878">
    <property type="entry name" value="TB_dom"/>
</dbReference>
<dbReference type="InterPro" id="IPR036773">
    <property type="entry name" value="TB_dom_sf"/>
</dbReference>
<dbReference type="InterPro" id="IPR052080">
    <property type="entry name" value="vWF_C/EGF_Fibrillin"/>
</dbReference>
<dbReference type="PANTHER" id="PTHR47333:SF4">
    <property type="entry name" value="EGF-LIKE DOMAIN-CONTAINING PROTEIN"/>
    <property type="match status" value="1"/>
</dbReference>
<dbReference type="PANTHER" id="PTHR47333">
    <property type="entry name" value="VON WILLEBRAND FACTOR C AND EGF DOMAIN-CONTAINING PROTEIN"/>
    <property type="match status" value="1"/>
</dbReference>
<dbReference type="Pfam" id="PF12662">
    <property type="entry name" value="cEGF"/>
    <property type="match status" value="4"/>
</dbReference>
<dbReference type="Pfam" id="PF12947">
    <property type="entry name" value="EGF_3"/>
    <property type="match status" value="1"/>
</dbReference>
<dbReference type="Pfam" id="PF07645">
    <property type="entry name" value="EGF_CA"/>
    <property type="match status" value="33"/>
</dbReference>
<dbReference type="Pfam" id="PF21364">
    <property type="entry name" value="EGF_FBN_1st"/>
    <property type="match status" value="1"/>
</dbReference>
<dbReference type="Pfam" id="PF18193">
    <property type="entry name" value="Fibrillin_U_N"/>
    <property type="match status" value="1"/>
</dbReference>
<dbReference type="Pfam" id="PF14670">
    <property type="entry name" value="FXa_inhibition"/>
    <property type="match status" value="1"/>
</dbReference>
<dbReference type="Pfam" id="PF12661">
    <property type="entry name" value="hEGF"/>
    <property type="match status" value="3"/>
</dbReference>
<dbReference type="Pfam" id="PF00683">
    <property type="entry name" value="TB"/>
    <property type="match status" value="9"/>
</dbReference>
<dbReference type="PIRSF" id="PIRSF036312">
    <property type="entry name" value="Fibrillin"/>
    <property type="match status" value="1"/>
</dbReference>
<dbReference type="PRINTS" id="PR00010">
    <property type="entry name" value="EGFBLOOD"/>
</dbReference>
<dbReference type="SMART" id="SM00181">
    <property type="entry name" value="EGF"/>
    <property type="match status" value="46"/>
</dbReference>
<dbReference type="SMART" id="SM00179">
    <property type="entry name" value="EGF_CA"/>
    <property type="match status" value="44"/>
</dbReference>
<dbReference type="SUPFAM" id="SSF57196">
    <property type="entry name" value="EGF/Laminin"/>
    <property type="match status" value="7"/>
</dbReference>
<dbReference type="SUPFAM" id="SSF57184">
    <property type="entry name" value="Growth factor receptor domain"/>
    <property type="match status" value="13"/>
</dbReference>
<dbReference type="SUPFAM" id="SSF57581">
    <property type="entry name" value="TB module/8-cys domain"/>
    <property type="match status" value="9"/>
</dbReference>
<dbReference type="PROSITE" id="PS00010">
    <property type="entry name" value="ASX_HYDROXYL"/>
    <property type="match status" value="43"/>
</dbReference>
<dbReference type="PROSITE" id="PS00022">
    <property type="entry name" value="EGF_1"/>
    <property type="match status" value="2"/>
</dbReference>
<dbReference type="PROSITE" id="PS01186">
    <property type="entry name" value="EGF_2"/>
    <property type="match status" value="37"/>
</dbReference>
<dbReference type="PROSITE" id="PS50026">
    <property type="entry name" value="EGF_3"/>
    <property type="match status" value="45"/>
</dbReference>
<dbReference type="PROSITE" id="PS01187">
    <property type="entry name" value="EGF_CA"/>
    <property type="match status" value="43"/>
</dbReference>
<dbReference type="PROSITE" id="PS51364">
    <property type="entry name" value="TB"/>
    <property type="match status" value="9"/>
</dbReference>
<proteinExistence type="evidence at protein level"/>
<keyword id="KW-0025">Alternative splicing</keyword>
<keyword id="KW-0106">Calcium</keyword>
<keyword id="KW-0225">Disease variant</keyword>
<keyword id="KW-1015">Disulfide bond</keyword>
<keyword id="KW-0245">EGF-like domain</keyword>
<keyword id="KW-0272">Extracellular matrix</keyword>
<keyword id="KW-0325">Glycoprotein</keyword>
<keyword id="KW-0372">Hormone</keyword>
<keyword id="KW-1267">Proteomics identification</keyword>
<keyword id="KW-1185">Reference proteome</keyword>
<keyword id="KW-0677">Repeat</keyword>
<keyword id="KW-0964">Secreted</keyword>
<keyword id="KW-0732">Signal</keyword>
<sequence>MGRRRRLCLQLYFLWLGCVVLWAQGTAGQPQPPPPKPPRPQPPPQQVRSATAGSEGGFLAPEYREEGAAVASRVRRRGQQDVLRGPNVCGSRFHSYCCPGWKTLPGGNQCIVPICRNSCGDGFCSRPNMCTCSSGQISSTCGSKSIQQCSVRCMNGGTCADDHCQCQKGYIGTYCGQPVCENGCQNGGRCIGPNRCACVYGFTGPQCERDYRTGPCFTQVNNQMCQGQLTGIVCTKTLCCATIGRAWGHPCEMCPAQPQPCRRGFIPNIRTGACQDVDECQAIPGICQGGNCINTVGSFECRCPAGHKQSETTQKCEDIDECSIIPGICETGECSNTVGSYFCVCPRGYVTSTDGSRCIDQRTGMCFSGLVNGRCAQELPGRMTKMQCCCEPGRCWGIGTIPEACPVRGSEEYRRLCMDGLPMGGIPGSAGSRPGGTGGNGFAPSGNGNGYGPGGTGFIPIPGGNGFSPGVGGAGVGAGGQGPIITGLTILNQTIDICKHHANLCLNGRCIPTVSSYRCECNMGYKQDANGDCIDVDECTSNPCTNGDCVNTPGSYYCKCHAGFQRTPTKQACIDIDECIQNGVLCKNGRCVNTDGSFQCICNAGFELTTDGKNCVDHDECTTTNMCLNGMCINEDGSFKCICKPGFVLAPNGRYCTDVDECQTPGICMNGHCINSEGSFRCDCPPGLAVGMDGRVCVDTHMRSTCYGGIKKGVCVRPFPGAVTKSECCCANPDYGFGEPCQPCPAKNSAEFHGLCSSGVGITVDGRDINECALDPDICANGICENLRGSYRCNCNSGYEPDASGRNCIDIDECLVNRLLCDNGLCRNTPGSYSCTCPPGYVFRTETETCEDINECESNPCVNGACRNNLGSFNCECSPGSKLSSTGLICIDSLKGTCWLNIQDSRCEVNINGATLKSECCATLGAAWGSPCERCELDTACPRGLARIKGVTCEDVNECEVFPGVCPNGRCVNSKGSFHCECPEGLTLDGTGRVCLDIRMEQCYLKWDEDECIHPVPGKFRMDACCCAVGAAWGTECEECPKPGTKEYETLCPRGAGFANRGDVLTGRPFYKDINECKAFPGMCTYGKCRNTIGSFKCRCNSGFALDMEERNCTDIDECRISPDLCGSGICVNTPGSFECECFEGYESGFMMMKNCMDIDECERNPLLCRGGTCVNTEGSFQCDCPLGHELSPSREDCVDINECSLSDNLCRNGKCVNMIGTYQCSCNPGYQATPDRQGCTDIDECMIMNGGCDTQCTNSEGSYECSCSEGYALMPDGRSCADIDECENNPDICDGGQCTNIPGEYRCLCYDGFMASMDMKTCIDVNECDLNSNICMFGECENTKGSFICHCQLGYSVKKGTTGCTDVDECEIGAHNCDMHASCLNIPGSFKCSCREGWIGNGIKCIDLDECSNGTHQCSINAQCVNTPGSYRCACSEGFTGDGFTCSDVDECAENINLCENGQCLNVPGAYRCECEMGFTPASDSRSCQDIDECSFQNICVFGTCNNLPGMFHCICDDGYELDRTGGNCTDIDECADPINCVNGLCVNTPGRYECNCPPDFQLNPTGVGCVDNRVGNCYLKFGPRGDGSLSCNTEIGVGVSRSSCCCSLGKAWGNPCETCPPVNSTEYYTLCPGGEGFRPNPITIILEDIDECQELPGLCQGGNCINTFGSFQCECPQGYYLSEDTRICEDIDECFAHPGVCGPGTCYNTLGNYTCICPPEYMQVNGGHNCMDMRKSFCYRSYNGTTCENELPFNVTKRMCCCTYNVGKAWNKPCEPCPTPGTADFKTICGNIPGFTFDIHTGKAVDIDECKEIPGICANGVCINQIGSFRCECPTGFSYNDLLLVCEDIDECSNGDNLCQRNADCINSPGSYRCECAAGFKLSPNGACVDRNECLEIPNVCSHGLCVDLQGSYQCICHNGFKASQDQTMCMDVDECERHPCGNGTCKNTVGSYNCLCYPGFELTHNNDCLDIDECSSFFGQVCRNGRCFNEIGSFKCLCNEGYELTPDGKNCIDTNECVALPGSCSPGTCQNLEGSFRCICPPGYEVKSENCIDINECDEDPNICLFGSCTNTPGGFQCLCPPGFVLSDNGRRCFDTRQSFCFTNFENGKCSVPKAFNTTKAKCCCSKMPGEGWGDPCELCPKDDEVAFQDLCPYGHGTVPSLHDTREDVNECLESPGICSNGQCINTDGSFRCECPMGYNLDYTGVRCVDTDECSIGNPCGNGTCTNVIGSFECNCNEGFEPGPMMNCEDINECAQNPLLCAFRCMNTFGSYECTCPIGYALREDQKMCKDLDECAEGLHDCESRGMMCKNLIGTFMCICPPGMARRPDGEGCVDENECRTKPGICENGRCVNIIGSYRCECNEGFQSSSSGTECLDNRQGLCFAEVLQTICQMASSSRNLVTKSECCCDGGRGWGHQCELCPLPGTAQYKKICPHGPGYTTDGRDIDECKVMPNLCTNGQCINTMGSFRCFCKVGYTTDISGTSCIDLDECSQSPKPCNYICKNTEGSYQCSCPRGYVLQEDGKTCKDLDECQTKQHNCQFLCVNTLGGFTCKCPPGFTQHHTACIDNNECGSQPSLCGAKGICQNTPGSFSCECQRGFSLDATGLNCEDVDECDGNHRCQHGCQNILGGYRCGCPQGYIQHYQWNQCVDENECSNPNACGSASCYNTLGSYKCACPSGFSFDQFSSACHDVNECSSSKNPCNYGCSNTEGGYLCGCPPGYYRVGQGHCVSGMGFNKGQYLSLDTEVDEENALSPEACYECKINGYSKKDSRQKRSIHEPDPTAVEQISLESVDMDSPVNMKFNLSHLGSKEHILELRPAIQPLNNHIRYVISQGNDDSVFRIHQRNGLSYLHTAKKKLMPGTYTLEITSIPLYKKKELKKLEESNEDDYLLGELGEALRMRLQIQLY</sequence>
<gene>
    <name evidence="26 29" type="primary">FBN2</name>
</gene>